<evidence type="ECO:0000250" key="1">
    <source>
        <dbReference type="UniProtKB" id="P61585"/>
    </source>
</evidence>
<evidence type="ECO:0000250" key="2">
    <source>
        <dbReference type="UniProtKB" id="P63001"/>
    </source>
</evidence>
<evidence type="ECO:0000250" key="3">
    <source>
        <dbReference type="UniProtKB" id="Q6RUV5"/>
    </source>
</evidence>
<evidence type="ECO:0000255" key="4"/>
<evidence type="ECO:0000269" key="5">
    <source>
    </source>
</evidence>
<evidence type="ECO:0000269" key="6">
    <source>
    </source>
</evidence>
<evidence type="ECO:0000269" key="7">
    <source>
    </source>
</evidence>
<evidence type="ECO:0000269" key="8">
    <source>
    </source>
</evidence>
<evidence type="ECO:0000269" key="9">
    <source>
    </source>
</evidence>
<evidence type="ECO:0000269" key="10">
    <source>
    </source>
</evidence>
<evidence type="ECO:0000269" key="11">
    <source>
    </source>
</evidence>
<evidence type="ECO:0000269" key="12">
    <source>
    </source>
</evidence>
<evidence type="ECO:0000269" key="13">
    <source>
    </source>
</evidence>
<evidence type="ECO:0000269" key="14">
    <source>
    </source>
</evidence>
<evidence type="ECO:0000269" key="15">
    <source>
    </source>
</evidence>
<evidence type="ECO:0000269" key="16">
    <source>
    </source>
</evidence>
<evidence type="ECO:0000269" key="17">
    <source>
    </source>
</evidence>
<evidence type="ECO:0000269" key="18">
    <source>
    </source>
</evidence>
<evidence type="ECO:0000269" key="19">
    <source>
    </source>
</evidence>
<evidence type="ECO:0000269" key="20">
    <source>
    </source>
</evidence>
<evidence type="ECO:0000269" key="21">
    <source>
    </source>
</evidence>
<evidence type="ECO:0000269" key="22">
    <source>
    </source>
</evidence>
<evidence type="ECO:0000269" key="23">
    <source>
    </source>
</evidence>
<evidence type="ECO:0000269" key="24">
    <source>
    </source>
</evidence>
<evidence type="ECO:0000269" key="25">
    <source>
    </source>
</evidence>
<evidence type="ECO:0000269" key="26">
    <source>
    </source>
</evidence>
<evidence type="ECO:0000269" key="27">
    <source>
    </source>
</evidence>
<evidence type="ECO:0000269" key="28">
    <source>
    </source>
</evidence>
<evidence type="ECO:0000269" key="29">
    <source>
    </source>
</evidence>
<evidence type="ECO:0000269" key="30">
    <source>
    </source>
</evidence>
<evidence type="ECO:0000269" key="31">
    <source>
    </source>
</evidence>
<evidence type="ECO:0000269" key="32">
    <source>
    </source>
</evidence>
<evidence type="ECO:0000269" key="33">
    <source>
    </source>
</evidence>
<evidence type="ECO:0000269" key="34">
    <source>
    </source>
</evidence>
<evidence type="ECO:0000269" key="35">
    <source>
    </source>
</evidence>
<evidence type="ECO:0000269" key="36">
    <source>
    </source>
</evidence>
<evidence type="ECO:0000269" key="37">
    <source>
    </source>
</evidence>
<evidence type="ECO:0000269" key="38">
    <source>
    </source>
</evidence>
<evidence type="ECO:0000269" key="39">
    <source>
    </source>
</evidence>
<evidence type="ECO:0000269" key="40">
    <source>
    </source>
</evidence>
<evidence type="ECO:0000269" key="41">
    <source>
    </source>
</evidence>
<evidence type="ECO:0000269" key="42">
    <source>
    </source>
</evidence>
<evidence type="ECO:0000269" key="43">
    <source>
    </source>
</evidence>
<evidence type="ECO:0000269" key="44">
    <source>
    </source>
</evidence>
<evidence type="ECO:0000269" key="45">
    <source>
    </source>
</evidence>
<evidence type="ECO:0000269" key="46">
    <source>
    </source>
</evidence>
<evidence type="ECO:0000269" key="47">
    <source>
    </source>
</evidence>
<evidence type="ECO:0000269" key="48">
    <source>
    </source>
</evidence>
<evidence type="ECO:0000269" key="49">
    <source>
    </source>
</evidence>
<evidence type="ECO:0000269" key="50">
    <source>
    </source>
</evidence>
<evidence type="ECO:0000269" key="51">
    <source>
    </source>
</evidence>
<evidence type="ECO:0000269" key="52">
    <source>
    </source>
</evidence>
<evidence type="ECO:0000269" key="53">
    <source>
    </source>
</evidence>
<evidence type="ECO:0000269" key="54">
    <source>
    </source>
</evidence>
<evidence type="ECO:0000269" key="55">
    <source>
    </source>
</evidence>
<evidence type="ECO:0000269" key="56">
    <source>
    </source>
</evidence>
<evidence type="ECO:0000269" key="57">
    <source>
    </source>
</evidence>
<evidence type="ECO:0000269" key="58">
    <source>
    </source>
</evidence>
<evidence type="ECO:0000269" key="59">
    <source>
    </source>
</evidence>
<evidence type="ECO:0000269" key="60">
    <source>
    </source>
</evidence>
<evidence type="ECO:0000269" key="61">
    <source>
    </source>
</evidence>
<evidence type="ECO:0000269" key="62">
    <source>
    </source>
</evidence>
<evidence type="ECO:0000269" key="63">
    <source>
    </source>
</evidence>
<evidence type="ECO:0000269" key="64">
    <source>
    </source>
</evidence>
<evidence type="ECO:0000269" key="65">
    <source>
    </source>
</evidence>
<evidence type="ECO:0000269" key="66">
    <source>
    </source>
</evidence>
<evidence type="ECO:0000269" key="67">
    <source>
    </source>
</evidence>
<evidence type="ECO:0000269" key="68">
    <source>
    </source>
</evidence>
<evidence type="ECO:0000269" key="69">
    <source>
    </source>
</evidence>
<evidence type="ECO:0000269" key="70">
    <source>
    </source>
</evidence>
<evidence type="ECO:0000269" key="71">
    <source>
    </source>
</evidence>
<evidence type="ECO:0000269" key="72">
    <source>
    </source>
</evidence>
<evidence type="ECO:0000269" key="73">
    <source>
    </source>
</evidence>
<evidence type="ECO:0000269" key="74">
    <source>
    </source>
</evidence>
<evidence type="ECO:0000269" key="75">
    <source>
    </source>
</evidence>
<evidence type="ECO:0000269" key="76">
    <source>
    </source>
</evidence>
<evidence type="ECO:0000269" key="77">
    <source>
    </source>
</evidence>
<evidence type="ECO:0000269" key="78">
    <source>
    </source>
</evidence>
<evidence type="ECO:0000269" key="79">
    <source ref="7"/>
</evidence>
<evidence type="ECO:0000303" key="80">
    <source>
    </source>
</evidence>
<evidence type="ECO:0000303" key="81">
    <source>
    </source>
</evidence>
<evidence type="ECO:0000303" key="82">
    <source ref="5"/>
</evidence>
<evidence type="ECO:0000305" key="83"/>
<evidence type="ECO:0000305" key="84">
    <source>
    </source>
</evidence>
<evidence type="ECO:0000305" key="85">
    <source>
    </source>
</evidence>
<evidence type="ECO:0000305" key="86">
    <source>
    </source>
</evidence>
<evidence type="ECO:0000305" key="87">
    <source>
    </source>
</evidence>
<evidence type="ECO:0000312" key="88">
    <source>
        <dbReference type="HGNC" id="HGNC:9801"/>
    </source>
</evidence>
<evidence type="ECO:0007744" key="89">
    <source>
        <dbReference type="PDB" id="1E96"/>
    </source>
</evidence>
<evidence type="ECO:0007744" key="90">
    <source>
        <dbReference type="PDB" id="2WKP"/>
    </source>
</evidence>
<evidence type="ECO:0007744" key="91">
    <source>
        <dbReference type="PDB" id="2WKQ"/>
    </source>
</evidence>
<evidence type="ECO:0007744" key="92">
    <source>
        <dbReference type="PDB" id="2WKR"/>
    </source>
</evidence>
<evidence type="ECO:0007744" key="93">
    <source>
        <dbReference type="PDB" id="8Q0N"/>
    </source>
</evidence>
<evidence type="ECO:0007744" key="94">
    <source>
        <dbReference type="PDB" id="8WEJ"/>
    </source>
</evidence>
<evidence type="ECO:0007744" key="95">
    <source>
    </source>
</evidence>
<evidence type="ECO:0007829" key="96">
    <source>
        <dbReference type="PDB" id="1MH1"/>
    </source>
</evidence>
<evidence type="ECO:0007829" key="97">
    <source>
        <dbReference type="PDB" id="6X1G"/>
    </source>
</evidence>
<evidence type="ECO:0007829" key="98">
    <source>
        <dbReference type="PDB" id="7USE"/>
    </source>
</evidence>
<evidence type="ECO:0007829" key="99">
    <source>
        <dbReference type="PDB" id="8I5V"/>
    </source>
</evidence>
<feature type="chain" id="PRO_0000042036" description="Ras-related C3 botulinum toxin substrate 1">
    <location>
        <begin position="1"/>
        <end position="189"/>
    </location>
</feature>
<feature type="propeptide" id="PRO_0000042037" description="Removed in mature form" evidence="85">
    <location>
        <begin position="190"/>
        <end position="192"/>
    </location>
</feature>
<feature type="short sequence motif" description="Effector region" evidence="4">
    <location>
        <begin position="32"/>
        <end position="40"/>
    </location>
</feature>
<feature type="short sequence motif" description="Polybasic region; required for nuclear import" evidence="19">
    <location>
        <begin position="179"/>
        <end position="188"/>
    </location>
</feature>
<feature type="binding site" evidence="69 93">
    <location>
        <position position="12"/>
    </location>
    <ligand>
        <name>GTP</name>
        <dbReference type="ChEBI" id="CHEBI:37565"/>
    </ligand>
</feature>
<feature type="binding site" evidence="9 69 70 89 90 91 92 93 94">
    <location>
        <position position="13"/>
    </location>
    <ligand>
        <name>GTP</name>
        <dbReference type="ChEBI" id="CHEBI:37565"/>
    </ligand>
</feature>
<feature type="binding site" evidence="9 69 89 90 91 92 93">
    <location>
        <position position="14"/>
    </location>
    <ligand>
        <name>GTP</name>
        <dbReference type="ChEBI" id="CHEBI:37565"/>
    </ligand>
</feature>
<feature type="binding site" evidence="9 69 89 90 91 92 93">
    <location>
        <position position="15"/>
    </location>
    <ligand>
        <name>GTP</name>
        <dbReference type="ChEBI" id="CHEBI:37565"/>
    </ligand>
</feature>
<feature type="binding site" evidence="9 69 70 89 90 91 92 93 94">
    <location>
        <position position="16"/>
    </location>
    <ligand>
        <name>GTP</name>
        <dbReference type="ChEBI" id="CHEBI:37565"/>
    </ligand>
</feature>
<feature type="binding site" evidence="9 69 70 89 90 91 92 93 94">
    <location>
        <position position="17"/>
    </location>
    <ligand>
        <name>GTP</name>
        <dbReference type="ChEBI" id="CHEBI:37565"/>
    </ligand>
</feature>
<feature type="binding site" evidence="9 69 70 89 90 91 92 93 94">
    <location>
        <position position="18"/>
    </location>
    <ligand>
        <name>GTP</name>
        <dbReference type="ChEBI" id="CHEBI:37565"/>
    </ligand>
</feature>
<feature type="binding site" evidence="9 69 89 90 91 92 93">
    <location>
        <position position="31"/>
    </location>
    <ligand>
        <name>GTP</name>
        <dbReference type="ChEBI" id="CHEBI:37565"/>
    </ligand>
</feature>
<feature type="binding site" evidence="9 69 89 90 91 92 93">
    <location>
        <position position="32"/>
    </location>
    <ligand>
        <name>GTP</name>
        <dbReference type="ChEBI" id="CHEBI:37565"/>
    </ligand>
</feature>
<feature type="binding site" evidence="9 69 89 90 91 92 93">
    <location>
        <position position="34"/>
    </location>
    <ligand>
        <name>GTP</name>
        <dbReference type="ChEBI" id="CHEBI:37565"/>
    </ligand>
</feature>
<feature type="binding site" evidence="9 69 70 89 90 91 92 93 94">
    <location>
        <position position="35"/>
    </location>
    <ligand>
        <name>GTP</name>
        <dbReference type="ChEBI" id="CHEBI:37565"/>
    </ligand>
</feature>
<feature type="binding site" evidence="69 93">
    <location>
        <position position="59"/>
    </location>
    <ligand>
        <name>GTP</name>
        <dbReference type="ChEBI" id="CHEBI:37565"/>
    </ligand>
</feature>
<feature type="binding site" evidence="9 89 90 91 92">
    <location>
        <position position="60"/>
    </location>
    <ligand>
        <name>GTP</name>
        <dbReference type="ChEBI" id="CHEBI:37565"/>
    </ligand>
</feature>
<feature type="binding site" evidence="9 69 89 90 91 92 93">
    <location>
        <position position="116"/>
    </location>
    <ligand>
        <name>GTP</name>
        <dbReference type="ChEBI" id="CHEBI:37565"/>
    </ligand>
</feature>
<feature type="binding site" evidence="9 69 89 90 91 92 93">
    <location>
        <position position="118"/>
    </location>
    <ligand>
        <name>GTP</name>
        <dbReference type="ChEBI" id="CHEBI:37565"/>
    </ligand>
</feature>
<feature type="binding site" evidence="69 93">
    <location>
        <position position="119"/>
    </location>
    <ligand>
        <name>GTP</name>
        <dbReference type="ChEBI" id="CHEBI:37565"/>
    </ligand>
</feature>
<feature type="binding site" evidence="70 94">
    <location>
        <position position="158"/>
    </location>
    <ligand>
        <name>GTP</name>
        <dbReference type="ChEBI" id="CHEBI:37565"/>
    </ligand>
</feature>
<feature type="binding site" evidence="9 69 70 89 90 91 92 93 94">
    <location>
        <position position="159"/>
    </location>
    <ligand>
        <name>GTP</name>
        <dbReference type="ChEBI" id="CHEBI:37565"/>
    </ligand>
</feature>
<feature type="binding site" evidence="9 69 70 89 90 91 92 93 94">
    <location>
        <position position="160"/>
    </location>
    <ligand>
        <name>GTP</name>
        <dbReference type="ChEBI" id="CHEBI:37565"/>
    </ligand>
</feature>
<feature type="modified residue" description="(Microbial infection) O-AMP-tyrosine; by Haemophilus IbpA; alternate" evidence="39">
    <location>
        <position position="32"/>
    </location>
</feature>
<feature type="modified residue" description="(Microbial infection) O-AMP-threonine; by Vibrio VopS" evidence="38">
    <location>
        <position position="35"/>
    </location>
</feature>
<feature type="modified residue" description="Phosphoserine" evidence="6">
    <location>
        <position position="71"/>
    </location>
</feature>
<feature type="modified residue" description="Cysteine methyl ester" evidence="1">
    <location>
        <position position="189"/>
    </location>
</feature>
<feature type="lipid moiety-binding region" description="(Microbial infection) N6-palmitoyl lysine" evidence="63">
    <location>
        <position position="183"/>
    </location>
</feature>
<feature type="lipid moiety-binding region" description="(Microbial infection) N6-palmitoyl lysine" evidence="63">
    <location>
        <position position="184"/>
    </location>
</feature>
<feature type="lipid moiety-binding region" description="S-geranylgeranyl cysteine" evidence="37">
    <location>
        <position position="189"/>
    </location>
</feature>
<feature type="glycosylation site" description="(Microbial infection) O-linked (GlcNAc) tyrosine; by Photorhabdus PAU_02230; alternate" evidence="60">
    <location>
        <position position="32"/>
    </location>
</feature>
<feature type="glycosylation site" description="(Microbial infection) O-alpha-linked (GlcNAc) threonine; by C.novyi toxin TcdA; alternate" evidence="75">
    <location>
        <position position="35"/>
    </location>
</feature>
<feature type="glycosylation site" description="(Microbial infection) O-linked (Glc) threonine; by C.difficile toxins TcdA and TcdB, and by P.sordellii toxin TcsL; alternate" evidence="41 61 72 73">
    <location>
        <position position="35"/>
    </location>
</feature>
<feature type="cross-link" description="Glycyl lysine isopeptide (Lys-Gly) (interchain with G-Cter in ubiquitin)" evidence="34 69">
    <location>
        <position position="147"/>
    </location>
</feature>
<feature type="cross-link" description="Glycyl lysine isopeptide (Lys-Gly) (interchain with G-Cter in ubiquitin)" evidence="59">
    <location>
        <position position="166"/>
    </location>
</feature>
<feature type="splice variant" id="VSP_005710" description="In isoform B." evidence="80 81 82">
    <original>T</original>
    <variation>TVGETYGKDITSRGKDKPIA</variation>
    <location>
        <position position="75"/>
    </location>
</feature>
<feature type="sequence variant" id="VAR_080454" description="In MRD48; decreased substrate adhesion-dependent cell spreading; dominant-negative effect; reduced neuronal proliferation; dbSNP:rs1554263326." evidence="62">
    <original>C</original>
    <variation>Y</variation>
    <location>
        <position position="18"/>
    </location>
</feature>
<feature type="sequence variant" id="VAR_014540" description="In dbSNP:rs2115193158.">
    <original>N</original>
    <variation>D</variation>
    <location>
        <position position="26"/>
    </location>
</feature>
<feature type="sequence variant" id="VAR_014541" description="In dbSNP:rs2115193183.">
    <original>F</original>
    <variation>L</variation>
    <location>
        <position position="28"/>
    </location>
</feature>
<feature type="sequence variant" id="VAR_080455" description="In MRD48; decreased substrate adhesion-dependent cell spreading; dominant-negative effect; reduced neuronal proliferation; dbSNP:rs1554263624." evidence="62">
    <original>N</original>
    <variation>S</variation>
    <location>
        <position position="39"/>
    </location>
</feature>
<feature type="sequence variant" id="VAR_080456" description="In MRD48; uncertain significance; dbSNP:rs1554263625." evidence="62">
    <original>V</original>
    <variation>L</variation>
    <location>
        <position position="51"/>
    </location>
</feature>
<feature type="sequence variant" id="VAR_080457" description="In MRD48; decreased substrate adhesion-dependent cell spreading; weak dominant-negative effect; dbSNP:rs1554263625." evidence="62">
    <original>V</original>
    <variation>M</variation>
    <location>
        <position position="51"/>
    </location>
</feature>
<feature type="sequence variant" id="VAR_014542" description="In dbSNP:rs5837.">
    <original>A</original>
    <variation>T</variation>
    <location>
        <position position="59"/>
    </location>
</feature>
<feature type="sequence variant" id="VAR_014543" description="In dbSNP:rs5831.">
    <original>D</original>
    <variation>G</variation>
    <location>
        <position position="63"/>
    </location>
</feature>
<feature type="sequence variant" id="VAR_080458" description="In MRD48; increased substrate adhesion-dependent cell spreading; constitutively active; dbSNP:rs1554263626." evidence="62">
    <original>Y</original>
    <variation>D</variation>
    <location>
        <position position="64"/>
    </location>
</feature>
<feature type="sequence variant" id="VAR_080459" description="In MRD48; decreased substrate adhesion-dependent cell spreading; weak dominant-negative effect; dbSNP:rs2115201441." evidence="62">
    <original>P</original>
    <variation>L</variation>
    <location>
        <position position="73"/>
    </location>
</feature>
<feature type="sequence variant" id="VAR_014545" description="In dbSNP:rs5826.">
    <original>V</original>
    <variation>G</variation>
    <location>
        <position position="93"/>
    </location>
</feature>
<feature type="sequence variant" id="VAR_014544" description="In dbSNP:rs5825.">
    <original>V</original>
    <variation>I</variation>
    <location>
        <position position="93"/>
    </location>
</feature>
<feature type="sequence variant" id="VAR_014546" description="In dbSNP:rs2115217353.">
    <original>T</original>
    <variation>I</variation>
    <location>
        <position position="108"/>
    </location>
</feature>
<feature type="sequence variant" id="VAR_014547" description="In dbSNP:rs5828.">
    <original>K</original>
    <variation>R</variation>
    <location>
        <position position="130"/>
    </location>
</feature>
<feature type="sequence variant" id="VAR_014548" description="In dbSNP:rs5835.">
    <original>K</original>
    <variation>E</variation>
    <location>
        <position position="133"/>
    </location>
</feature>
<feature type="sequence variant" id="VAR_033303" description="In dbSNP:rs11540455." evidence="79">
    <original>T</original>
    <variation>I</variation>
    <location>
        <position position="135"/>
    </location>
</feature>
<feature type="sequence variant" id="VAR_080460" description="In MRD48; decreased substrate adhesion-dependent cell spreading; weak dominant-negative effect; dbSNP:rs1554264268." evidence="62">
    <original>C</original>
    <variation>Y</variation>
    <location>
        <position position="157"/>
    </location>
</feature>
<feature type="sequence variant" id="VAR_014549" description="In dbSNP:rs16063.">
    <original>P</original>
    <variation>S</variation>
    <location>
        <position position="180"/>
    </location>
</feature>
<feature type="sequence variant" id="VAR_014550" description="In dbSNP:rs5836.">
    <original>V</original>
    <variation>E</variation>
    <location>
        <position position="182"/>
    </location>
</feature>
<feature type="mutagenesis site" description="Constitutively active. Interacts with PARD6 proteins. Increases nuclear localization and up-regulates transcriptional activity of NR3C2. Doesn't interact with CYRIB. Increases interaction with GARRE1." evidence="14 36 64 66">
    <original>G</original>
    <variation>V</variation>
    <location>
        <position position="12"/>
    </location>
</feature>
<feature type="mutagenesis site" description="Constitutively inactivated. Abolishes interaction with PARD6 proteins. No effect on NR3C2 transcriptional activity. No interaction with PPP5C. Doesn't activate PPP5C phosphatase activity and translocate PPP5C to the plasma membrane. Doesn't interact with CYRIB." evidence="14 36 42 64">
    <original>T</original>
    <variation>N</variation>
    <location>
        <position position="17"/>
    </location>
</feature>
<feature type="mutagenesis site" description="No interaction with PPP5C; when associated with L-61. Translocates to the plasma membrane; also when associated with L-61." evidence="42">
    <original>G</original>
    <variation>V</variation>
    <location>
        <position position="30"/>
    </location>
</feature>
<feature type="mutagenesis site" description="Abolishes AMPylation by Haemophilus IbpA." evidence="39">
    <original>Y</original>
    <variation>F</variation>
    <location>
        <position position="32"/>
    </location>
</feature>
<feature type="mutagenesis site" description="Abolishes AMPylation by Vibrio VopS." evidence="38 42">
    <original>T</original>
    <variation>A</variation>
    <location>
        <position position="35"/>
    </location>
</feature>
<feature type="mutagenesis site" description="No interaction with PPP5C; when associated with L-61. Translocates to the plasma membrane; also when associated with L-61." evidence="38 42">
    <original>T</original>
    <variation>S</variation>
    <location>
        <position position="35"/>
    </location>
</feature>
<feature type="mutagenesis site" description="Strongly reduced interaction with PLCB2." evidence="30">
    <original>F</original>
    <variation>A</variation>
    <location>
        <position position="37"/>
    </location>
</feature>
<feature type="mutagenesis site" description="Strongly reduced interaction with PLCB2." evidence="30">
    <original>W</original>
    <variation>A</variation>
    <location>
        <position position="56"/>
    </location>
</feature>
<feature type="mutagenesis site" description="Constitutively active. Interacts with PARD6 proteins. Interacts with PPP5C, activates its phosphatase activity and translocates PPP5C to the plasma membrane. No effect on interaction with RAPH1. Interacts with CYRIB. No interaction with PPP5C; when associated with V-30 or S-35. Translocates to the plasma membrane; also when associated with V-30 or S-35." evidence="7 35 42 63 64 69">
    <original>Q</original>
    <variation>L</variation>
    <location>
        <position position="61"/>
    </location>
</feature>
<feature type="mutagenesis site" description="Strongly reduced interaction with PLCB2." evidence="30">
    <original>L</original>
    <variation>A</variation>
    <location>
        <position position="67"/>
    </location>
</feature>
<feature type="mutagenesis site" description="Strongly reduced interaction with PLCB2." evidence="30">
    <original>L</original>
    <variation>A</variation>
    <location>
        <position position="70"/>
    </location>
</feature>
<feature type="mutagenesis site" description="Loss of AKT-mediated phosphorylation and FBXL19-induced polyubiquitination." evidence="6 59">
    <original>S</original>
    <variation>A</variation>
    <location>
        <position position="71"/>
    </location>
</feature>
<feature type="mutagenesis site" description="Loss of FBXL19-induced polyubiquitination." evidence="59">
    <original>K</original>
    <variation>R</variation>
    <location>
        <position position="166"/>
    </location>
</feature>
<feature type="mutagenesis site" description="In 4KA mutant; abolished palmitoylation by the V.cholerae toxin RtxA." evidence="63">
    <original>KKRKRK</original>
    <variation>AARARA</variation>
    <location>
        <begin position="183"/>
        <end position="188"/>
    </location>
</feature>
<feature type="mutagenesis site" description="Slightly decreased palmitoylation by the V.cholerae toxin RtxA." evidence="63">
    <original>K</original>
    <variation>A</variation>
    <location>
        <position position="183"/>
    </location>
</feature>
<feature type="mutagenesis site" description="Slightly decreased palmitoylation by the V.cholerae toxin RtxA." evidence="63">
    <original>K</original>
    <variation>A</variation>
    <location>
        <position position="184"/>
    </location>
</feature>
<feature type="mutagenesis site" description="In 2RA mutant; does not affect palmitoylation by the V.cholerae toxin RtxA." evidence="63">
    <original>RKR</original>
    <variation>AKA</variation>
    <location>
        <begin position="185"/>
        <end position="187"/>
    </location>
</feature>
<feature type="mutagenesis site" description="Decreased palmitoylation by the V.cholerae toxin RtxA." evidence="63">
    <original>K</original>
    <variation>A</variation>
    <location>
        <position position="186"/>
    </location>
</feature>
<feature type="mutagenesis site" description="Decreased palmitoylation by the V.cholerae toxin RtxA." evidence="63">
    <original>K</original>
    <variation>A</variation>
    <location>
        <position position="188"/>
    </location>
</feature>
<feature type="sequence conflict" description="In Ref. 2; AAA36544." evidence="83" ref="2">
    <location>
        <position position="192"/>
    </location>
</feature>
<feature type="strand" evidence="96">
    <location>
        <begin position="2"/>
        <end position="9"/>
    </location>
</feature>
<feature type="helix" evidence="97">
    <location>
        <begin position="12"/>
        <end position="14"/>
    </location>
</feature>
<feature type="helix" evidence="96">
    <location>
        <begin position="16"/>
        <end position="25"/>
    </location>
</feature>
<feature type="helix" evidence="99">
    <location>
        <begin position="29"/>
        <end position="31"/>
    </location>
</feature>
<feature type="strand" evidence="96">
    <location>
        <begin position="39"/>
        <end position="46"/>
    </location>
</feature>
<feature type="strand" evidence="96">
    <location>
        <begin position="49"/>
        <end position="56"/>
    </location>
</feature>
<feature type="helix" evidence="96">
    <location>
        <begin position="62"/>
        <end position="64"/>
    </location>
</feature>
<feature type="turn" evidence="96">
    <location>
        <begin position="65"/>
        <end position="67"/>
    </location>
</feature>
<feature type="helix" evidence="96">
    <location>
        <begin position="68"/>
        <end position="71"/>
    </location>
</feature>
<feature type="strand" evidence="98">
    <location>
        <begin position="72"/>
        <end position="74"/>
    </location>
</feature>
<feature type="strand" evidence="96">
    <location>
        <begin position="76"/>
        <end position="83"/>
    </location>
</feature>
<feature type="helix" evidence="96">
    <location>
        <begin position="87"/>
        <end position="95"/>
    </location>
</feature>
<feature type="helix" evidence="96">
    <location>
        <begin position="97"/>
        <end position="104"/>
    </location>
</feature>
<feature type="strand" evidence="97">
    <location>
        <begin position="106"/>
        <end position="108"/>
    </location>
</feature>
<feature type="strand" evidence="96">
    <location>
        <begin position="110"/>
        <end position="115"/>
    </location>
</feature>
<feature type="helix" evidence="96">
    <location>
        <begin position="117"/>
        <end position="120"/>
    </location>
</feature>
<feature type="helix" evidence="96">
    <location>
        <begin position="123"/>
        <end position="131"/>
    </location>
</feature>
<feature type="helix" evidence="96">
    <location>
        <begin position="139"/>
        <end position="148"/>
    </location>
</feature>
<feature type="strand" evidence="96">
    <location>
        <begin position="152"/>
        <end position="156"/>
    </location>
</feature>
<feature type="turn" evidence="96">
    <location>
        <begin position="159"/>
        <end position="161"/>
    </location>
</feature>
<feature type="helix" evidence="96">
    <location>
        <begin position="165"/>
        <end position="176"/>
    </location>
</feature>
<feature type="modified residue" description="Phosphoserine" evidence="95">
    <location sequence="P63000-2">
        <position position="71"/>
    </location>
</feature>
<organism>
    <name type="scientific">Homo sapiens</name>
    <name type="common">Human</name>
    <dbReference type="NCBI Taxonomy" id="9606"/>
    <lineage>
        <taxon>Eukaryota</taxon>
        <taxon>Metazoa</taxon>
        <taxon>Chordata</taxon>
        <taxon>Craniata</taxon>
        <taxon>Vertebrata</taxon>
        <taxon>Euteleostomi</taxon>
        <taxon>Mammalia</taxon>
        <taxon>Eutheria</taxon>
        <taxon>Euarchontoglires</taxon>
        <taxon>Primates</taxon>
        <taxon>Haplorrhini</taxon>
        <taxon>Catarrhini</taxon>
        <taxon>Hominidae</taxon>
        <taxon>Homo</taxon>
    </lineage>
</organism>
<dbReference type="EC" id="3.6.5.2" evidence="50"/>
<dbReference type="EMBL" id="M29870">
    <property type="protein sequence ID" value="AAA36537.1"/>
    <property type="molecule type" value="mRNA"/>
</dbReference>
<dbReference type="EMBL" id="M31467">
    <property type="protein sequence ID" value="AAA36544.1"/>
    <property type="molecule type" value="mRNA"/>
</dbReference>
<dbReference type="EMBL" id="AJ132694">
    <property type="protein sequence ID" value="CAA10732.1"/>
    <property type="molecule type" value="mRNA"/>
</dbReference>
<dbReference type="EMBL" id="AJ132695">
    <property type="protein sequence ID" value="CAB53579.5"/>
    <property type="molecule type" value="Genomic_DNA"/>
</dbReference>
<dbReference type="EMBL" id="AJ132695">
    <property type="protein sequence ID" value="CAA10733.6"/>
    <property type="molecule type" value="Genomic_DNA"/>
</dbReference>
<dbReference type="EMBL" id="AF136373">
    <property type="protein sequence ID" value="AAD30547.1"/>
    <property type="molecule type" value="mRNA"/>
</dbReference>
<dbReference type="EMBL" id="AY279384">
    <property type="protein sequence ID" value="AAQ16632.1"/>
    <property type="molecule type" value="mRNA"/>
</dbReference>
<dbReference type="EMBL" id="AF498964">
    <property type="protein sequence ID" value="AAM21111.1"/>
    <property type="molecule type" value="mRNA"/>
</dbReference>
<dbReference type="EMBL" id="BT007121">
    <property type="protein sequence ID" value="AAP35785.1"/>
    <property type="molecule type" value="mRNA"/>
</dbReference>
<dbReference type="EMBL" id="DQ165078">
    <property type="protein sequence ID" value="AAZ80485.1"/>
    <property type="status" value="ALT_INIT"/>
    <property type="molecule type" value="Genomic_DNA"/>
</dbReference>
<dbReference type="EMBL" id="AC009412">
    <property type="protein sequence ID" value="AAS07511.1"/>
    <property type="molecule type" value="Genomic_DNA"/>
</dbReference>
<dbReference type="EMBL" id="AC009412">
    <property type="protein sequence ID" value="AAS07512.1"/>
    <property type="molecule type" value="Genomic_DNA"/>
</dbReference>
<dbReference type="EMBL" id="BC004247">
    <property type="protein sequence ID" value="AAH04247.1"/>
    <property type="molecule type" value="mRNA"/>
</dbReference>
<dbReference type="EMBL" id="BC050687">
    <property type="protein sequence ID" value="AAH50687.1"/>
    <property type="molecule type" value="mRNA"/>
</dbReference>
<dbReference type="EMBL" id="BC107748">
    <property type="protein sequence ID" value="AAI07749.1"/>
    <property type="molecule type" value="mRNA"/>
</dbReference>
<dbReference type="CCDS" id="CCDS5348.1"/>
<dbReference type="CCDS" id="CCDS5349.1">
    <molecule id="P63000-2"/>
</dbReference>
<dbReference type="PIR" id="A34788">
    <property type="entry name" value="TVHUC1"/>
</dbReference>
<dbReference type="RefSeq" id="NP_008839.2">
    <molecule id="P63000-1"/>
    <property type="nucleotide sequence ID" value="NM_006908.4"/>
</dbReference>
<dbReference type="RefSeq" id="NP_061485.1">
    <molecule id="P63000-2"/>
    <property type="nucleotide sequence ID" value="NM_018890.4"/>
</dbReference>
<dbReference type="PDB" id="1E96">
    <property type="method" value="X-ray"/>
    <property type="resolution" value="2.40 A"/>
    <property type="chains" value="A=2-192"/>
</dbReference>
<dbReference type="PDB" id="1FOE">
    <property type="method" value="X-ray"/>
    <property type="resolution" value="2.80 A"/>
    <property type="chains" value="B/D/F/H=1-177"/>
</dbReference>
<dbReference type="PDB" id="1G4U">
    <property type="method" value="X-ray"/>
    <property type="resolution" value="2.30 A"/>
    <property type="chains" value="R=1-184"/>
</dbReference>
<dbReference type="PDB" id="1HE1">
    <property type="method" value="X-ray"/>
    <property type="resolution" value="2.00 A"/>
    <property type="chains" value="C/D=2-176"/>
</dbReference>
<dbReference type="PDB" id="1HH4">
    <property type="method" value="X-ray"/>
    <property type="resolution" value="2.70 A"/>
    <property type="chains" value="A/B=2-192"/>
</dbReference>
<dbReference type="PDB" id="1I4D">
    <property type="method" value="X-ray"/>
    <property type="resolution" value="2.50 A"/>
    <property type="chains" value="D=1-192"/>
</dbReference>
<dbReference type="PDB" id="1I4L">
    <property type="method" value="X-ray"/>
    <property type="resolution" value="2.70 A"/>
    <property type="chains" value="D=1-192"/>
</dbReference>
<dbReference type="PDB" id="1I4T">
    <property type="method" value="X-ray"/>
    <property type="resolution" value="2.60 A"/>
    <property type="chains" value="D=1-192"/>
</dbReference>
<dbReference type="PDB" id="1MH1">
    <property type="method" value="X-ray"/>
    <property type="resolution" value="1.38 A"/>
    <property type="chains" value="A=2-184"/>
</dbReference>
<dbReference type="PDB" id="1RYF">
    <property type="method" value="X-ray"/>
    <property type="resolution" value="1.75 A"/>
    <property type="chains" value="A/B=1-182"/>
</dbReference>
<dbReference type="PDB" id="1RYH">
    <property type="method" value="X-ray"/>
    <property type="resolution" value="1.75 A"/>
    <property type="chains" value="A/B=1-182"/>
</dbReference>
<dbReference type="PDB" id="2FJU">
    <property type="method" value="X-ray"/>
    <property type="resolution" value="2.20 A"/>
    <property type="chains" value="A=1-177"/>
</dbReference>
<dbReference type="PDB" id="2H7V">
    <property type="method" value="X-ray"/>
    <property type="resolution" value="2.60 A"/>
    <property type="chains" value="A/B=1-184"/>
</dbReference>
<dbReference type="PDB" id="2NZ8">
    <property type="method" value="X-ray"/>
    <property type="resolution" value="2.00 A"/>
    <property type="chains" value="A=1-177"/>
</dbReference>
<dbReference type="PDB" id="2P2L">
    <property type="method" value="X-ray"/>
    <property type="resolution" value="1.90 A"/>
    <property type="chains" value="A/B/C=1-184"/>
</dbReference>
<dbReference type="PDB" id="2RMK">
    <property type="method" value="NMR"/>
    <property type="chains" value="A=1-192"/>
</dbReference>
<dbReference type="PDB" id="2VRW">
    <property type="method" value="X-ray"/>
    <property type="resolution" value="1.85 A"/>
    <property type="chains" value="A=1-184"/>
</dbReference>
<dbReference type="PDB" id="2WKP">
    <property type="method" value="X-ray"/>
    <property type="resolution" value="1.90 A"/>
    <property type="chains" value="A=4-180"/>
</dbReference>
<dbReference type="PDB" id="2WKQ">
    <property type="method" value="X-ray"/>
    <property type="resolution" value="1.60 A"/>
    <property type="chains" value="A=4-180"/>
</dbReference>
<dbReference type="PDB" id="2WKR">
    <property type="method" value="X-ray"/>
    <property type="resolution" value="2.20 A"/>
    <property type="chains" value="A=4-180"/>
</dbReference>
<dbReference type="PDB" id="2YIN">
    <property type="method" value="X-ray"/>
    <property type="resolution" value="2.70 A"/>
    <property type="chains" value="C/D=1-177"/>
</dbReference>
<dbReference type="PDB" id="3B13">
    <property type="method" value="X-ray"/>
    <property type="resolution" value="3.01 A"/>
    <property type="chains" value="B/D=1-177"/>
</dbReference>
<dbReference type="PDB" id="3BJI">
    <property type="method" value="X-ray"/>
    <property type="resolution" value="2.60 A"/>
    <property type="chains" value="C/D=1-177"/>
</dbReference>
<dbReference type="PDB" id="3RYT">
    <property type="method" value="X-ray"/>
    <property type="resolution" value="3.58 A"/>
    <property type="chains" value="C=1-177"/>
</dbReference>
<dbReference type="PDB" id="3SBD">
    <property type="method" value="X-ray"/>
    <property type="resolution" value="2.10 A"/>
    <property type="chains" value="A/B=2-177"/>
</dbReference>
<dbReference type="PDB" id="3SBE">
    <property type="method" value="X-ray"/>
    <property type="resolution" value="2.60 A"/>
    <property type="chains" value="A=2-177"/>
</dbReference>
<dbReference type="PDB" id="3SU8">
    <property type="method" value="X-ray"/>
    <property type="resolution" value="3.20 A"/>
    <property type="chains" value="A=1-177"/>
</dbReference>
<dbReference type="PDB" id="3SUA">
    <property type="method" value="X-ray"/>
    <property type="resolution" value="4.39 A"/>
    <property type="chains" value="A/B/C=1-177"/>
</dbReference>
<dbReference type="PDB" id="3TH5">
    <property type="method" value="X-ray"/>
    <property type="resolution" value="2.30 A"/>
    <property type="chains" value="A/B=2-177"/>
</dbReference>
<dbReference type="PDB" id="4GZL">
    <property type="method" value="X-ray"/>
    <property type="resolution" value="2.00 A"/>
    <property type="chains" value="A/B=2-177"/>
</dbReference>
<dbReference type="PDB" id="4GZM">
    <property type="method" value="X-ray"/>
    <property type="resolution" value="2.80 A"/>
    <property type="chains" value="A/B=2-177"/>
</dbReference>
<dbReference type="PDB" id="4YON">
    <property type="method" value="X-ray"/>
    <property type="resolution" value="1.95 A"/>
    <property type="chains" value="B=1-177"/>
</dbReference>
<dbReference type="PDB" id="5FI0">
    <property type="method" value="X-ray"/>
    <property type="resolution" value="3.28 A"/>
    <property type="chains" value="B/D/F/H=1-192"/>
</dbReference>
<dbReference type="PDB" id="5HZH">
    <property type="method" value="X-ray"/>
    <property type="resolution" value="2.60 A"/>
    <property type="chains" value="A=1-180"/>
</dbReference>
<dbReference type="PDB" id="5N6O">
    <property type="method" value="X-ray"/>
    <property type="resolution" value="2.59 A"/>
    <property type="chains" value="A/B=2-177"/>
</dbReference>
<dbReference type="PDB" id="5O33">
    <property type="method" value="X-ray"/>
    <property type="resolution" value="1.64 A"/>
    <property type="chains" value="A=1-177"/>
</dbReference>
<dbReference type="PDB" id="5QQD">
    <property type="method" value="X-ray"/>
    <property type="resolution" value="1.91 A"/>
    <property type="chains" value="A=1-177"/>
</dbReference>
<dbReference type="PDB" id="5QQE">
    <property type="method" value="X-ray"/>
    <property type="resolution" value="1.95 A"/>
    <property type="chains" value="A=1-177"/>
</dbReference>
<dbReference type="PDB" id="5QQF">
    <property type="method" value="X-ray"/>
    <property type="resolution" value="2.26 A"/>
    <property type="chains" value="A=1-177"/>
</dbReference>
<dbReference type="PDB" id="5QQG">
    <property type="method" value="X-ray"/>
    <property type="resolution" value="2.23 A"/>
    <property type="chains" value="A=1-177"/>
</dbReference>
<dbReference type="PDB" id="5QQH">
    <property type="method" value="X-ray"/>
    <property type="resolution" value="2.09 A"/>
    <property type="chains" value="A=1-177"/>
</dbReference>
<dbReference type="PDB" id="5QQI">
    <property type="method" value="X-ray"/>
    <property type="resolution" value="2.08 A"/>
    <property type="chains" value="A=1-177"/>
</dbReference>
<dbReference type="PDB" id="5QQJ">
    <property type="method" value="X-ray"/>
    <property type="resolution" value="1.90 A"/>
    <property type="chains" value="A=1-177"/>
</dbReference>
<dbReference type="PDB" id="5QQK">
    <property type="method" value="X-ray"/>
    <property type="resolution" value="2.24 A"/>
    <property type="chains" value="A=1-177"/>
</dbReference>
<dbReference type="PDB" id="5QQL">
    <property type="method" value="X-ray"/>
    <property type="resolution" value="2.25 A"/>
    <property type="chains" value="A=1-177"/>
</dbReference>
<dbReference type="PDB" id="5QQM">
    <property type="method" value="X-ray"/>
    <property type="resolution" value="2.02 A"/>
    <property type="chains" value="A=1-177"/>
</dbReference>
<dbReference type="PDB" id="5QQN">
    <property type="method" value="X-ray"/>
    <property type="resolution" value="2.26 A"/>
    <property type="chains" value="A=1-177"/>
</dbReference>
<dbReference type="PDB" id="5QU9">
    <property type="method" value="X-ray"/>
    <property type="resolution" value="2.00 A"/>
    <property type="chains" value="A=1-177"/>
</dbReference>
<dbReference type="PDB" id="6AGP">
    <property type="method" value="NMR"/>
    <property type="chains" value="A=1-181"/>
</dbReference>
<dbReference type="PDB" id="6BC1">
    <property type="method" value="X-ray"/>
    <property type="resolution" value="2.90 A"/>
    <property type="chains" value="A/B=2-177"/>
</dbReference>
<dbReference type="PDB" id="6TGC">
    <property type="method" value="EM"/>
    <property type="resolution" value="4.10 A"/>
    <property type="chains" value="C/F=1-192"/>
</dbReference>
<dbReference type="PDB" id="6X1G">
    <property type="method" value="X-ray"/>
    <property type="resolution" value="1.60 A"/>
    <property type="chains" value="B/D=1-177"/>
</dbReference>
<dbReference type="PDB" id="7AJK">
    <property type="method" value="X-ray"/>
    <property type="resolution" value="3.10 A"/>
    <property type="chains" value="BBB=2-177"/>
</dbReference>
<dbReference type="PDB" id="7DPA">
    <property type="method" value="EM"/>
    <property type="resolution" value="3.80 A"/>
    <property type="chains" value="B/E=1-177"/>
</dbReference>
<dbReference type="PDB" id="7SJ4">
    <property type="method" value="EM"/>
    <property type="resolution" value="2.86 A"/>
    <property type="chains" value="B=1-192"/>
</dbReference>
<dbReference type="PDB" id="7USD">
    <property type="method" value="EM"/>
    <property type="resolution" value="3.00 A"/>
    <property type="chains" value="F=1-188"/>
</dbReference>
<dbReference type="PDB" id="7USE">
    <property type="method" value="EM"/>
    <property type="resolution" value="3.00 A"/>
    <property type="chains" value="F/G=1-188"/>
</dbReference>
<dbReference type="PDB" id="8I5V">
    <property type="method" value="X-ray"/>
    <property type="resolution" value="1.73 A"/>
    <property type="chains" value="B=1-177"/>
</dbReference>
<dbReference type="PDB" id="8I5W">
    <property type="method" value="X-ray"/>
    <property type="resolution" value="2.43 A"/>
    <property type="chains" value="B=1-177"/>
</dbReference>
<dbReference type="PDB" id="8Q0N">
    <property type="method" value="EM"/>
    <property type="resolution" value="4.20 A"/>
    <property type="chains" value="C=1-192"/>
</dbReference>
<dbReference type="PDB" id="8WEJ">
    <property type="method" value="EM"/>
    <property type="resolution" value="2.79 A"/>
    <property type="chains" value="E=1-192"/>
</dbReference>
<dbReference type="PDB" id="8ZJ2">
    <property type="method" value="EM"/>
    <property type="resolution" value="4.66 A"/>
    <property type="chains" value="C/G=1-177"/>
</dbReference>
<dbReference type="PDB" id="8ZJI">
    <property type="method" value="EM"/>
    <property type="resolution" value="4.23 A"/>
    <property type="chains" value="C/F=1-177"/>
</dbReference>
<dbReference type="PDB" id="8ZJJ">
    <property type="method" value="EM"/>
    <property type="resolution" value="4.23 A"/>
    <property type="chains" value="C/F=1-177"/>
</dbReference>
<dbReference type="PDB" id="8ZJK">
    <property type="method" value="EM"/>
    <property type="resolution" value="4.23 A"/>
    <property type="chains" value="C/F=1-177"/>
</dbReference>
<dbReference type="PDB" id="8ZJL">
    <property type="method" value="EM"/>
    <property type="resolution" value="4.31 A"/>
    <property type="chains" value="C/F=1-177"/>
</dbReference>
<dbReference type="PDB" id="8ZJM">
    <property type="method" value="EM"/>
    <property type="resolution" value="4.52 A"/>
    <property type="chains" value="C/F=1-177"/>
</dbReference>
<dbReference type="PDBsum" id="1E96"/>
<dbReference type="PDBsum" id="1FOE"/>
<dbReference type="PDBsum" id="1G4U"/>
<dbReference type="PDBsum" id="1HE1"/>
<dbReference type="PDBsum" id="1HH4"/>
<dbReference type="PDBsum" id="1I4D"/>
<dbReference type="PDBsum" id="1I4L"/>
<dbReference type="PDBsum" id="1I4T"/>
<dbReference type="PDBsum" id="1MH1"/>
<dbReference type="PDBsum" id="1RYF"/>
<dbReference type="PDBsum" id="1RYH"/>
<dbReference type="PDBsum" id="2FJU"/>
<dbReference type="PDBsum" id="2H7V"/>
<dbReference type="PDBsum" id="2NZ8"/>
<dbReference type="PDBsum" id="2P2L"/>
<dbReference type="PDBsum" id="2RMK"/>
<dbReference type="PDBsum" id="2VRW"/>
<dbReference type="PDBsum" id="2WKP"/>
<dbReference type="PDBsum" id="2WKQ"/>
<dbReference type="PDBsum" id="2WKR"/>
<dbReference type="PDBsum" id="2YIN"/>
<dbReference type="PDBsum" id="3B13"/>
<dbReference type="PDBsum" id="3BJI"/>
<dbReference type="PDBsum" id="3RYT"/>
<dbReference type="PDBsum" id="3SBD"/>
<dbReference type="PDBsum" id="3SBE"/>
<dbReference type="PDBsum" id="3SU8"/>
<dbReference type="PDBsum" id="3SUA"/>
<dbReference type="PDBsum" id="3TH5"/>
<dbReference type="PDBsum" id="4GZL"/>
<dbReference type="PDBsum" id="4GZM"/>
<dbReference type="PDBsum" id="4YON"/>
<dbReference type="PDBsum" id="5FI0"/>
<dbReference type="PDBsum" id="5HZH"/>
<dbReference type="PDBsum" id="5N6O"/>
<dbReference type="PDBsum" id="5O33"/>
<dbReference type="PDBsum" id="5QQD"/>
<dbReference type="PDBsum" id="5QQE"/>
<dbReference type="PDBsum" id="5QQF"/>
<dbReference type="PDBsum" id="5QQG"/>
<dbReference type="PDBsum" id="5QQH"/>
<dbReference type="PDBsum" id="5QQI"/>
<dbReference type="PDBsum" id="5QQJ"/>
<dbReference type="PDBsum" id="5QQK"/>
<dbReference type="PDBsum" id="5QQL"/>
<dbReference type="PDBsum" id="5QQM"/>
<dbReference type="PDBsum" id="5QQN"/>
<dbReference type="PDBsum" id="5QU9"/>
<dbReference type="PDBsum" id="6AGP"/>
<dbReference type="PDBsum" id="6BC1"/>
<dbReference type="PDBsum" id="6TGC"/>
<dbReference type="PDBsum" id="6X1G"/>
<dbReference type="PDBsum" id="7AJK"/>
<dbReference type="PDBsum" id="7DPA"/>
<dbReference type="PDBsum" id="7SJ4"/>
<dbReference type="PDBsum" id="7USD"/>
<dbReference type="PDBsum" id="7USE"/>
<dbReference type="PDBsum" id="8I5V"/>
<dbReference type="PDBsum" id="8I5W"/>
<dbReference type="PDBsum" id="8Q0N"/>
<dbReference type="PDBsum" id="8WEJ"/>
<dbReference type="PDBsum" id="8ZJ2"/>
<dbReference type="PDBsum" id="8ZJI"/>
<dbReference type="PDBsum" id="8ZJJ"/>
<dbReference type="PDBsum" id="8ZJK"/>
<dbReference type="PDBsum" id="8ZJL"/>
<dbReference type="PDBsum" id="8ZJM"/>
<dbReference type="BMRB" id="P63000"/>
<dbReference type="EMDB" id="EMD-10498"/>
<dbReference type="EMDB" id="EMD-18056"/>
<dbReference type="EMDB" id="EMD-25153"/>
<dbReference type="EMDB" id="EMD-26733"/>
<dbReference type="EMDB" id="EMD-26734"/>
<dbReference type="EMDB" id="EMD-30802"/>
<dbReference type="EMDB" id="EMD-37593"/>
<dbReference type="EMDB" id="EMD-60136"/>
<dbReference type="EMDB" id="EMD-60146"/>
<dbReference type="EMDB" id="EMD-60147"/>
<dbReference type="EMDB" id="EMD-60148"/>
<dbReference type="EMDB" id="EMD-60149"/>
<dbReference type="EMDB" id="EMD-60150"/>
<dbReference type="SMR" id="P63000"/>
<dbReference type="BioGRID" id="111817">
    <property type="interactions" value="1025"/>
</dbReference>
<dbReference type="ComplexPortal" id="CPX-1017">
    <property type="entry name" value="Phagocyte NADPH oxidase complex, RAC1 variant"/>
</dbReference>
<dbReference type="CORUM" id="P63000"/>
<dbReference type="DIP" id="DIP-29260N"/>
<dbReference type="FunCoup" id="P63000">
    <property type="interactions" value="3083"/>
</dbReference>
<dbReference type="IntAct" id="P63000">
    <property type="interactions" value="277"/>
</dbReference>
<dbReference type="MINT" id="P63000"/>
<dbReference type="STRING" id="9606.ENSP00000348461"/>
<dbReference type="BindingDB" id="P63000"/>
<dbReference type="ChEMBL" id="CHEMBL6094"/>
<dbReference type="DrugBank" id="DB00993">
    <property type="generic name" value="Azathioprine"/>
</dbReference>
<dbReference type="DrugBank" id="DB00514">
    <property type="generic name" value="Dextromethorphan"/>
</dbReference>
<dbReference type="DrugBank" id="DB04315">
    <property type="generic name" value="Guanosine-5'-Diphosphate"/>
</dbReference>
<dbReference type="DrugCentral" id="P63000"/>
<dbReference type="GlyCosmos" id="P63000">
    <property type="glycosylation" value="2 sites, No reported glycans"/>
</dbReference>
<dbReference type="GlyGen" id="P63000">
    <property type="glycosylation" value="3 sites, 1 O-linked glycan (1 site)"/>
</dbReference>
<dbReference type="iPTMnet" id="P63000"/>
<dbReference type="MetOSite" id="P63000"/>
<dbReference type="PhosphoSitePlus" id="P63000"/>
<dbReference type="SwissPalm" id="P63000"/>
<dbReference type="BioMuta" id="RAC1"/>
<dbReference type="DMDM" id="51702787"/>
<dbReference type="jPOST" id="P63000"/>
<dbReference type="MassIVE" id="P63000"/>
<dbReference type="PaxDb" id="9606-ENSP00000348461"/>
<dbReference type="PeptideAtlas" id="P63000"/>
<dbReference type="ProteomicsDB" id="57467"/>
<dbReference type="ProteomicsDB" id="57468">
    <molecule id="P63000-2"/>
</dbReference>
<dbReference type="Pumba" id="P63000"/>
<dbReference type="ABCD" id="P63000">
    <property type="antibodies" value="5 sequenced antibodies"/>
</dbReference>
<dbReference type="Antibodypedia" id="4545">
    <property type="antibodies" value="687 antibodies from 41 providers"/>
</dbReference>
<dbReference type="CPTC" id="P63000">
    <property type="antibodies" value="2 antibodies"/>
</dbReference>
<dbReference type="DNASU" id="5879"/>
<dbReference type="Ensembl" id="ENST00000348035.9">
    <molecule id="P63000-1"/>
    <property type="protein sequence ID" value="ENSP00000258737.7"/>
    <property type="gene ID" value="ENSG00000136238.20"/>
</dbReference>
<dbReference type="Ensembl" id="ENST00000356142.4">
    <molecule id="P63000-2"/>
    <property type="protein sequence ID" value="ENSP00000348461.4"/>
    <property type="gene ID" value="ENSG00000136238.20"/>
</dbReference>
<dbReference type="GeneID" id="5879"/>
<dbReference type="KEGG" id="hsa:5879"/>
<dbReference type="MANE-Select" id="ENST00000348035.9">
    <property type="protein sequence ID" value="ENSP00000258737.7"/>
    <property type="RefSeq nucleotide sequence ID" value="NM_006908.5"/>
    <property type="RefSeq protein sequence ID" value="NP_008839.2"/>
</dbReference>
<dbReference type="UCSC" id="uc003spw.4">
    <property type="organism name" value="human"/>
</dbReference>
<dbReference type="AGR" id="HGNC:9801"/>
<dbReference type="CTD" id="5879"/>
<dbReference type="DisGeNET" id="5879"/>
<dbReference type="GeneCards" id="RAC1"/>
<dbReference type="HGNC" id="HGNC:9801">
    <property type="gene designation" value="RAC1"/>
</dbReference>
<dbReference type="HPA" id="ENSG00000136238">
    <property type="expression patterns" value="Low tissue specificity"/>
</dbReference>
<dbReference type="MalaCards" id="RAC1"/>
<dbReference type="MIM" id="602048">
    <property type="type" value="gene"/>
</dbReference>
<dbReference type="MIM" id="617751">
    <property type="type" value="phenotype"/>
</dbReference>
<dbReference type="neXtProt" id="NX_P63000"/>
<dbReference type="OpenTargets" id="ENSG00000136238"/>
<dbReference type="Orphanet" id="500159">
    <property type="disease" value="Microcephaly-corpus callosum and cerebellar vermis hypoplasia-facial dysmorphism-intellectual disability syndrom"/>
</dbReference>
<dbReference type="PharmGKB" id="PA34162"/>
<dbReference type="VEuPathDB" id="HostDB:ENSG00000136238"/>
<dbReference type="eggNOG" id="KOG0393">
    <property type="taxonomic scope" value="Eukaryota"/>
</dbReference>
<dbReference type="GeneTree" id="ENSGT00940000153500"/>
<dbReference type="HOGENOM" id="CLU_041217_21_3_1"/>
<dbReference type="InParanoid" id="P63000"/>
<dbReference type="OMA" id="PFCDVFL"/>
<dbReference type="OrthoDB" id="8953216at2759"/>
<dbReference type="PAN-GO" id="P63000">
    <property type="GO annotations" value="19 GO annotations based on evolutionary models"/>
</dbReference>
<dbReference type="PhylomeDB" id="P63000"/>
<dbReference type="TreeFam" id="TF101109"/>
<dbReference type="BRENDA" id="3.6.5.2">
    <property type="organism ID" value="2681"/>
</dbReference>
<dbReference type="PathwayCommons" id="P63000"/>
<dbReference type="Reactome" id="R-HSA-114604">
    <property type="pathway name" value="GPVI-mediated activation cascade"/>
</dbReference>
<dbReference type="Reactome" id="R-HSA-1257604">
    <property type="pathway name" value="PIP3 activates AKT signaling"/>
</dbReference>
<dbReference type="Reactome" id="R-HSA-1433557">
    <property type="pathway name" value="Signaling by SCF-KIT"/>
</dbReference>
<dbReference type="Reactome" id="R-HSA-1445148">
    <property type="pathway name" value="Translocation of SLC2A4 (GLUT4) to the plasma membrane"/>
</dbReference>
<dbReference type="Reactome" id="R-HSA-164944">
    <property type="pathway name" value="Nef and signal transduction"/>
</dbReference>
<dbReference type="Reactome" id="R-HSA-193648">
    <property type="pathway name" value="NRAGE signals death through JNK"/>
</dbReference>
<dbReference type="Reactome" id="R-HSA-2029482">
    <property type="pathway name" value="Regulation of actin dynamics for phagocytic cup formation"/>
</dbReference>
<dbReference type="Reactome" id="R-HSA-2219530">
    <property type="pathway name" value="Constitutive Signaling by Aberrant PI3K in Cancer"/>
</dbReference>
<dbReference type="Reactome" id="R-HSA-2424491">
    <property type="pathway name" value="DAP12 signaling"/>
</dbReference>
<dbReference type="Reactome" id="R-HSA-2871796">
    <property type="pathway name" value="FCERI mediated MAPK activation"/>
</dbReference>
<dbReference type="Reactome" id="R-HSA-389359">
    <property type="pathway name" value="CD28 dependent Vav1 pathway"/>
</dbReference>
<dbReference type="Reactome" id="R-HSA-3928662">
    <property type="pathway name" value="EPHB-mediated forward signaling"/>
</dbReference>
<dbReference type="Reactome" id="R-HSA-3928664">
    <property type="pathway name" value="Ephrin signaling"/>
</dbReference>
<dbReference type="Reactome" id="R-HSA-3928665">
    <property type="pathway name" value="EPH-ephrin mediated repulsion of cells"/>
</dbReference>
<dbReference type="Reactome" id="R-HSA-399954">
    <property type="pathway name" value="Sema3A PAK dependent Axon repulsion"/>
</dbReference>
<dbReference type="Reactome" id="R-HSA-399955">
    <property type="pathway name" value="SEMA3A-Plexin repulsion signaling by inhibiting Integrin adhesion"/>
</dbReference>
<dbReference type="Reactome" id="R-HSA-4086400">
    <property type="pathway name" value="PCP/CE pathway"/>
</dbReference>
<dbReference type="Reactome" id="R-HSA-416550">
    <property type="pathway name" value="Sema4D mediated inhibition of cell attachment and migration"/>
</dbReference>
<dbReference type="Reactome" id="R-HSA-418885">
    <property type="pathway name" value="DCC mediated attractive signaling"/>
</dbReference>
<dbReference type="Reactome" id="R-HSA-428540">
    <property type="pathway name" value="Activation of RAC1"/>
</dbReference>
<dbReference type="Reactome" id="R-HSA-428543">
    <property type="pathway name" value="Inactivation of CDC42 and RAC1"/>
</dbReference>
<dbReference type="Reactome" id="R-HSA-4420097">
    <property type="pathway name" value="VEGFA-VEGFR2 Pathway"/>
</dbReference>
<dbReference type="Reactome" id="R-HSA-445144">
    <property type="pathway name" value="Signal transduction by L1"/>
</dbReference>
<dbReference type="Reactome" id="R-HSA-5218920">
    <property type="pathway name" value="VEGFR2 mediated vascular permeability"/>
</dbReference>
<dbReference type="Reactome" id="R-HSA-5625740">
    <property type="pathway name" value="RHO GTPases activate PKNs"/>
</dbReference>
<dbReference type="Reactome" id="R-HSA-5625900">
    <property type="pathway name" value="RHO GTPases activate CIT"/>
</dbReference>
<dbReference type="Reactome" id="R-HSA-5625970">
    <property type="pathway name" value="RHO GTPases activate KTN1"/>
</dbReference>
<dbReference type="Reactome" id="R-HSA-5626467">
    <property type="pathway name" value="RHO GTPases activate IQGAPs"/>
</dbReference>
<dbReference type="Reactome" id="R-HSA-5627123">
    <property type="pathway name" value="RHO GTPases activate PAKs"/>
</dbReference>
<dbReference type="Reactome" id="R-HSA-5663213">
    <property type="pathway name" value="RHO GTPases Activate WASPs and WAVEs"/>
</dbReference>
<dbReference type="Reactome" id="R-HSA-5663220">
    <property type="pathway name" value="RHO GTPases Activate Formins"/>
</dbReference>
<dbReference type="Reactome" id="R-HSA-5668599">
    <property type="pathway name" value="RHO GTPases Activate NADPH Oxidases"/>
</dbReference>
<dbReference type="Reactome" id="R-HSA-5687128">
    <property type="pathway name" value="MAPK6/MAPK4 signaling"/>
</dbReference>
<dbReference type="Reactome" id="R-HSA-6798695">
    <property type="pathway name" value="Neutrophil degranulation"/>
</dbReference>
<dbReference type="Reactome" id="R-HSA-6811558">
    <property type="pathway name" value="PI5P, PP2A and IER3 Regulate PI3K/AKT Signaling"/>
</dbReference>
<dbReference type="Reactome" id="R-HSA-8849471">
    <property type="pathway name" value="PTK6 Regulates RHO GTPases, RAS GTPase and MAP kinases"/>
</dbReference>
<dbReference type="Reactome" id="R-HSA-8875555">
    <property type="pathway name" value="MET activates RAP1 and RAC1"/>
</dbReference>
<dbReference type="Reactome" id="R-HSA-9013149">
    <property type="pathway name" value="RAC1 GTPase cycle"/>
</dbReference>
<dbReference type="Reactome" id="R-HSA-9032759">
    <property type="pathway name" value="NTRK2 activates RAC1"/>
</dbReference>
<dbReference type="Reactome" id="R-HSA-9032845">
    <property type="pathway name" value="Activated NTRK2 signals through CDK5"/>
</dbReference>
<dbReference type="Reactome" id="R-HSA-9619229">
    <property type="pathway name" value="Activation of RAC1 downstream of NMDARs"/>
</dbReference>
<dbReference type="Reactome" id="R-HSA-9664422">
    <property type="pathway name" value="FCGR3A-mediated phagocytosis"/>
</dbReference>
<dbReference type="Reactome" id="R-HSA-9673324">
    <property type="pathway name" value="WNT5:FZD7-mediated leishmania damping"/>
</dbReference>
<dbReference type="Reactome" id="R-HSA-9748787">
    <property type="pathway name" value="Azathioprine ADME"/>
</dbReference>
<dbReference type="Reactome" id="R-HSA-983231">
    <property type="pathway name" value="Factors involved in megakaryocyte development and platelet production"/>
</dbReference>
<dbReference type="SignaLink" id="P63000"/>
<dbReference type="SIGNOR" id="P63000"/>
<dbReference type="BioGRID-ORCS" id="5879">
    <property type="hits" value="622 hits in 1180 CRISPR screens"/>
</dbReference>
<dbReference type="CD-CODE" id="FB4E32DD">
    <property type="entry name" value="Presynaptic clusters and postsynaptic densities"/>
</dbReference>
<dbReference type="ChiTaRS" id="RAC1">
    <property type="organism name" value="human"/>
</dbReference>
<dbReference type="EvolutionaryTrace" id="P63000"/>
<dbReference type="GeneWiki" id="RAC1"/>
<dbReference type="GenomeRNAi" id="5879"/>
<dbReference type="Pharos" id="P63000">
    <property type="development level" value="Tbio"/>
</dbReference>
<dbReference type="PRO" id="PR:P63000"/>
<dbReference type="Proteomes" id="UP000005640">
    <property type="component" value="Chromosome 7"/>
</dbReference>
<dbReference type="RNAct" id="P63000">
    <property type="molecule type" value="protein"/>
</dbReference>
<dbReference type="Bgee" id="ENSG00000136238">
    <property type="expression patterns" value="Expressed in esophagus squamous epithelium and 210 other cell types or tissues"/>
</dbReference>
<dbReference type="ExpressionAtlas" id="P63000">
    <property type="expression patterns" value="baseline and differential"/>
</dbReference>
<dbReference type="GO" id="GO:0005938">
    <property type="term" value="C:cell cortex"/>
    <property type="evidence" value="ECO:0000314"/>
    <property type="project" value="BHF-UCL"/>
</dbReference>
<dbReference type="GO" id="GO:0042995">
    <property type="term" value="C:cell projection"/>
    <property type="evidence" value="ECO:0000318"/>
    <property type="project" value="GO_Central"/>
</dbReference>
<dbReference type="GO" id="GO:0005737">
    <property type="term" value="C:cytoplasm"/>
    <property type="evidence" value="ECO:0000314"/>
    <property type="project" value="UniProtKB"/>
</dbReference>
<dbReference type="GO" id="GO:0036464">
    <property type="term" value="C:cytoplasmic ribonucleoprotein granule"/>
    <property type="evidence" value="ECO:0000314"/>
    <property type="project" value="ParkinsonsUK-UCL"/>
</dbReference>
<dbReference type="GO" id="GO:0031410">
    <property type="term" value="C:cytoplasmic vesicle"/>
    <property type="evidence" value="ECO:0000318"/>
    <property type="project" value="GO_Central"/>
</dbReference>
<dbReference type="GO" id="GO:0005856">
    <property type="term" value="C:cytoskeleton"/>
    <property type="evidence" value="ECO:0000318"/>
    <property type="project" value="GO_Central"/>
</dbReference>
<dbReference type="GO" id="GO:0005829">
    <property type="term" value="C:cytosol"/>
    <property type="evidence" value="ECO:0000250"/>
    <property type="project" value="UniProtKB"/>
</dbReference>
<dbReference type="GO" id="GO:0030425">
    <property type="term" value="C:dendrite"/>
    <property type="evidence" value="ECO:0007669"/>
    <property type="project" value="UniProtKB-SubCell"/>
</dbReference>
<dbReference type="GO" id="GO:0031901">
    <property type="term" value="C:early endosome membrane"/>
    <property type="evidence" value="ECO:0007669"/>
    <property type="project" value="Ensembl"/>
</dbReference>
<dbReference type="GO" id="GO:0005789">
    <property type="term" value="C:endoplasmic reticulum membrane"/>
    <property type="evidence" value="ECO:0000304"/>
    <property type="project" value="Reactome"/>
</dbReference>
<dbReference type="GO" id="GO:0070062">
    <property type="term" value="C:extracellular exosome"/>
    <property type="evidence" value="ECO:0007005"/>
    <property type="project" value="UniProtKB"/>
</dbReference>
<dbReference type="GO" id="GO:0101003">
    <property type="term" value="C:ficolin-1-rich granule membrane"/>
    <property type="evidence" value="ECO:0000304"/>
    <property type="project" value="Reactome"/>
</dbReference>
<dbReference type="GO" id="GO:0005925">
    <property type="term" value="C:focal adhesion"/>
    <property type="evidence" value="ECO:0007005"/>
    <property type="project" value="UniProtKB"/>
</dbReference>
<dbReference type="GO" id="GO:0098978">
    <property type="term" value="C:glutamatergic synapse"/>
    <property type="evidence" value="ECO:0000314"/>
    <property type="project" value="SynGO"/>
</dbReference>
<dbReference type="GO" id="GO:0060091">
    <property type="term" value="C:kinocilium"/>
    <property type="evidence" value="ECO:0007669"/>
    <property type="project" value="Ensembl"/>
</dbReference>
<dbReference type="GO" id="GO:0030027">
    <property type="term" value="C:lamellipodium"/>
    <property type="evidence" value="ECO:0000314"/>
    <property type="project" value="UniProtKB"/>
</dbReference>
<dbReference type="GO" id="GO:0042470">
    <property type="term" value="C:melanosome"/>
    <property type="evidence" value="ECO:0007669"/>
    <property type="project" value="UniProtKB-SubCell"/>
</dbReference>
<dbReference type="GO" id="GO:0016020">
    <property type="term" value="C:membrane"/>
    <property type="evidence" value="ECO:0000250"/>
    <property type="project" value="UniProtKB"/>
</dbReference>
<dbReference type="GO" id="GO:0043020">
    <property type="term" value="C:NADPH oxidase complex"/>
    <property type="evidence" value="ECO:0000314"/>
    <property type="project" value="UniProtKB"/>
</dbReference>
<dbReference type="GO" id="GO:0005634">
    <property type="term" value="C:nucleus"/>
    <property type="evidence" value="ECO:0000314"/>
    <property type="project" value="UniProtKB"/>
</dbReference>
<dbReference type="GO" id="GO:0000242">
    <property type="term" value="C:pericentriolar material"/>
    <property type="evidence" value="ECO:0007669"/>
    <property type="project" value="Ensembl"/>
</dbReference>
<dbReference type="GO" id="GO:0001891">
    <property type="term" value="C:phagocytic cup"/>
    <property type="evidence" value="ECO:0007669"/>
    <property type="project" value="Ensembl"/>
</dbReference>
<dbReference type="GO" id="GO:0005886">
    <property type="term" value="C:plasma membrane"/>
    <property type="evidence" value="ECO:0000314"/>
    <property type="project" value="UniProtKB"/>
</dbReference>
<dbReference type="GO" id="GO:0098794">
    <property type="term" value="C:postsynapse"/>
    <property type="evidence" value="ECO:0000314"/>
    <property type="project" value="SynGO"/>
</dbReference>
<dbReference type="GO" id="GO:0045211">
    <property type="term" value="C:postsynaptic membrane"/>
    <property type="evidence" value="ECO:0007669"/>
    <property type="project" value="Ensembl"/>
</dbReference>
<dbReference type="GO" id="GO:0042734">
    <property type="term" value="C:presynaptic membrane"/>
    <property type="evidence" value="ECO:0007669"/>
    <property type="project" value="Ensembl"/>
</dbReference>
<dbReference type="GO" id="GO:0055038">
    <property type="term" value="C:recycling endosome membrane"/>
    <property type="evidence" value="ECO:0000314"/>
    <property type="project" value="UniProtKB"/>
</dbReference>
<dbReference type="GO" id="GO:0032587">
    <property type="term" value="C:ruffle membrane"/>
    <property type="evidence" value="ECO:0000314"/>
    <property type="project" value="UniProtKB"/>
</dbReference>
<dbReference type="GO" id="GO:0030667">
    <property type="term" value="C:secretory granule membrane"/>
    <property type="evidence" value="ECO:0000304"/>
    <property type="project" value="Reactome"/>
</dbReference>
<dbReference type="GO" id="GO:0030672">
    <property type="term" value="C:synaptic vesicle membrane"/>
    <property type="evidence" value="ECO:0007669"/>
    <property type="project" value="Ensembl"/>
</dbReference>
<dbReference type="GO" id="GO:0005802">
    <property type="term" value="C:trans-Golgi network"/>
    <property type="evidence" value="ECO:0000314"/>
    <property type="project" value="FlyBase"/>
</dbReference>
<dbReference type="GO" id="GO:0019899">
    <property type="term" value="F:enzyme binding"/>
    <property type="evidence" value="ECO:0000353"/>
    <property type="project" value="BHF-UCL"/>
</dbReference>
<dbReference type="GO" id="GO:0003925">
    <property type="term" value="F:G protein activity"/>
    <property type="evidence" value="ECO:0007669"/>
    <property type="project" value="UniProtKB-EC"/>
</dbReference>
<dbReference type="GO" id="GO:0005525">
    <property type="term" value="F:GTP binding"/>
    <property type="evidence" value="ECO:0000314"/>
    <property type="project" value="UniProtKB"/>
</dbReference>
<dbReference type="GO" id="GO:0030742">
    <property type="term" value="F:GTP-dependent protein binding"/>
    <property type="evidence" value="ECO:0007669"/>
    <property type="project" value="Ensembl"/>
</dbReference>
<dbReference type="GO" id="GO:0003924">
    <property type="term" value="F:GTPase activity"/>
    <property type="evidence" value="ECO:0000314"/>
    <property type="project" value="UniProtKB"/>
</dbReference>
<dbReference type="GO" id="GO:0019901">
    <property type="term" value="F:protein kinase binding"/>
    <property type="evidence" value="ECO:0000353"/>
    <property type="project" value="CAFA"/>
</dbReference>
<dbReference type="GO" id="GO:0044877">
    <property type="term" value="F:protein-containing complex binding"/>
    <property type="evidence" value="ECO:0000314"/>
    <property type="project" value="UniProtKB"/>
</dbReference>
<dbReference type="GO" id="GO:0051022">
    <property type="term" value="F:Rho GDP-dissociation inhibitor binding"/>
    <property type="evidence" value="ECO:0000250"/>
    <property type="project" value="UniProtKB"/>
</dbReference>
<dbReference type="GO" id="GO:0031996">
    <property type="term" value="F:thioesterase binding"/>
    <property type="evidence" value="ECO:0000353"/>
    <property type="project" value="UniProtKB"/>
</dbReference>
<dbReference type="GO" id="GO:0030036">
    <property type="term" value="P:actin cytoskeleton organization"/>
    <property type="evidence" value="ECO:0000316"/>
    <property type="project" value="MGI"/>
</dbReference>
<dbReference type="GO" id="GO:0007015">
    <property type="term" value="P:actin filament organization"/>
    <property type="evidence" value="ECO:0000315"/>
    <property type="project" value="UniProtKB"/>
</dbReference>
<dbReference type="GO" id="GO:0030041">
    <property type="term" value="P:actin filament polymerization"/>
    <property type="evidence" value="ECO:0000304"/>
    <property type="project" value="UniProtKB"/>
</dbReference>
<dbReference type="GO" id="GO:0048532">
    <property type="term" value="P:anatomical structure arrangement"/>
    <property type="evidence" value="ECO:0007669"/>
    <property type="project" value="Ensembl"/>
</dbReference>
<dbReference type="GO" id="GO:0009653">
    <property type="term" value="P:anatomical structure morphogenesis"/>
    <property type="evidence" value="ECO:0000304"/>
    <property type="project" value="ProtInc"/>
</dbReference>
<dbReference type="GO" id="GO:0086098">
    <property type="term" value="P:angiotensin-activated signaling pathway involved in heart process"/>
    <property type="evidence" value="ECO:0007669"/>
    <property type="project" value="Ensembl"/>
</dbReference>
<dbReference type="GO" id="GO:0002093">
    <property type="term" value="P:auditory receptor cell morphogenesis"/>
    <property type="evidence" value="ECO:0007669"/>
    <property type="project" value="Ensembl"/>
</dbReference>
<dbReference type="GO" id="GO:0007155">
    <property type="term" value="P:cell adhesion"/>
    <property type="evidence" value="ECO:0000304"/>
    <property type="project" value="ProtInc"/>
</dbReference>
<dbReference type="GO" id="GO:0060326">
    <property type="term" value="P:cell chemotaxis"/>
    <property type="evidence" value="ECO:0000318"/>
    <property type="project" value="GO_Central"/>
</dbReference>
<dbReference type="GO" id="GO:0016477">
    <property type="term" value="P:cell migration"/>
    <property type="evidence" value="ECO:0000314"/>
    <property type="project" value="UniProt"/>
</dbReference>
<dbReference type="GO" id="GO:0048870">
    <property type="term" value="P:cell motility"/>
    <property type="evidence" value="ECO:0000314"/>
    <property type="project" value="UniProtKB"/>
</dbReference>
<dbReference type="GO" id="GO:0030031">
    <property type="term" value="P:cell projection assembly"/>
    <property type="evidence" value="ECO:0000318"/>
    <property type="project" value="GO_Central"/>
</dbReference>
<dbReference type="GO" id="GO:0045216">
    <property type="term" value="P:cell-cell junction organization"/>
    <property type="evidence" value="ECO:0007669"/>
    <property type="project" value="Ensembl"/>
</dbReference>
<dbReference type="GO" id="GO:0007160">
    <property type="term" value="P:cell-matrix adhesion"/>
    <property type="evidence" value="ECO:0000303"/>
    <property type="project" value="BHF-UCL"/>
</dbReference>
<dbReference type="GO" id="GO:0021894">
    <property type="term" value="P:cerebral cortex GABAergic interneuron development"/>
    <property type="evidence" value="ECO:0007669"/>
    <property type="project" value="Ensembl"/>
</dbReference>
<dbReference type="GO" id="GO:0021799">
    <property type="term" value="P:cerebral cortex radially oriented cell migration"/>
    <property type="evidence" value="ECO:0007669"/>
    <property type="project" value="Ensembl"/>
</dbReference>
<dbReference type="GO" id="GO:0090103">
    <property type="term" value="P:cochlea morphogenesis"/>
    <property type="evidence" value="ECO:0007669"/>
    <property type="project" value="Ensembl"/>
</dbReference>
<dbReference type="GO" id="GO:0030865">
    <property type="term" value="P:cortical cytoskeleton organization"/>
    <property type="evidence" value="ECO:0000318"/>
    <property type="project" value="GO_Central"/>
</dbReference>
<dbReference type="GO" id="GO:0048813">
    <property type="term" value="P:dendrite morphogenesis"/>
    <property type="evidence" value="ECO:0007669"/>
    <property type="project" value="Ensembl"/>
</dbReference>
<dbReference type="GO" id="GO:0021831">
    <property type="term" value="P:embryonic olfactory bulb interneuron precursor migration"/>
    <property type="evidence" value="ECO:0007669"/>
    <property type="project" value="Ensembl"/>
</dbReference>
<dbReference type="GO" id="GO:0043652">
    <property type="term" value="P:engulfment of apoptotic cell"/>
    <property type="evidence" value="ECO:0007669"/>
    <property type="project" value="Ensembl"/>
</dbReference>
<dbReference type="GO" id="GO:0003382">
    <property type="term" value="P:epithelial cell morphogenesis"/>
    <property type="evidence" value="ECO:0007669"/>
    <property type="project" value="Ensembl"/>
</dbReference>
<dbReference type="GO" id="GO:0043131">
    <property type="term" value="P:erythrocyte enucleation"/>
    <property type="evidence" value="ECO:0007669"/>
    <property type="project" value="Ensembl"/>
</dbReference>
<dbReference type="GO" id="GO:0007163">
    <property type="term" value="P:establishment or maintenance of cell polarity"/>
    <property type="evidence" value="ECO:0000318"/>
    <property type="project" value="GO_Central"/>
</dbReference>
<dbReference type="GO" id="GO:0048012">
    <property type="term" value="P:hepatocyte growth factor receptor signaling pathway"/>
    <property type="evidence" value="ECO:0000315"/>
    <property type="project" value="CAFA"/>
</dbReference>
<dbReference type="GO" id="GO:0048873">
    <property type="term" value="P:homeostasis of number of cells within a tissue"/>
    <property type="evidence" value="ECO:0007669"/>
    <property type="project" value="Ensembl"/>
</dbReference>
<dbReference type="GO" id="GO:0006972">
    <property type="term" value="P:hyperosmotic response"/>
    <property type="evidence" value="ECO:0007669"/>
    <property type="project" value="Ensembl"/>
</dbReference>
<dbReference type="GO" id="GO:0006954">
    <property type="term" value="P:inflammatory response"/>
    <property type="evidence" value="ECO:0000304"/>
    <property type="project" value="ProtInc"/>
</dbReference>
<dbReference type="GO" id="GO:1904936">
    <property type="term" value="P:interneuron migration"/>
    <property type="evidence" value="ECO:0007669"/>
    <property type="project" value="Ensembl"/>
</dbReference>
<dbReference type="GO" id="GO:0035556">
    <property type="term" value="P:intracellular signal transduction"/>
    <property type="evidence" value="ECO:0000304"/>
    <property type="project" value="ProtInc"/>
</dbReference>
<dbReference type="GO" id="GO:0030032">
    <property type="term" value="P:lamellipodium assembly"/>
    <property type="evidence" value="ECO:0000315"/>
    <property type="project" value="UniProtKB"/>
</dbReference>
<dbReference type="GO" id="GO:0051668">
    <property type="term" value="P:localization within membrane"/>
    <property type="evidence" value="ECO:0000315"/>
    <property type="project" value="BHF-UCL"/>
</dbReference>
<dbReference type="GO" id="GO:1904948">
    <property type="term" value="P:midbrain dopaminergic neuron differentiation"/>
    <property type="evidence" value="ECO:0007669"/>
    <property type="project" value="Ensembl"/>
</dbReference>
<dbReference type="GO" id="GO:0008045">
    <property type="term" value="P:motor neuron axon guidance"/>
    <property type="evidence" value="ECO:0000318"/>
    <property type="project" value="GO_Central"/>
</dbReference>
<dbReference type="GO" id="GO:0010764">
    <property type="term" value="P:negative regulation of fibroblast migration"/>
    <property type="evidence" value="ECO:0000314"/>
    <property type="project" value="BHF-UCL"/>
</dbReference>
<dbReference type="GO" id="GO:0032707">
    <property type="term" value="P:negative regulation of interleukin-23 production"/>
    <property type="evidence" value="ECO:0000314"/>
    <property type="project" value="BHF-UCL"/>
</dbReference>
<dbReference type="GO" id="GO:0048261">
    <property type="term" value="P:negative regulation of receptor-mediated endocytosis"/>
    <property type="evidence" value="ECO:0000304"/>
    <property type="project" value="UniProtKB"/>
</dbReference>
<dbReference type="GO" id="GO:0001764">
    <property type="term" value="P:neuron migration"/>
    <property type="evidence" value="ECO:0000250"/>
    <property type="project" value="UniProtKB"/>
</dbReference>
<dbReference type="GO" id="GO:0030838">
    <property type="term" value="P:positive regulation of actin filament polymerization"/>
    <property type="evidence" value="ECO:0007669"/>
    <property type="project" value="Ensembl"/>
</dbReference>
<dbReference type="GO" id="GO:1903348">
    <property type="term" value="P:positive regulation of bicellular tight junction assembly"/>
    <property type="evidence" value="ECO:0000315"/>
    <property type="project" value="UniProtKB"/>
</dbReference>
<dbReference type="GO" id="GO:0010811">
    <property type="term" value="P:positive regulation of cell-substrate adhesion"/>
    <property type="evidence" value="ECO:0000316"/>
    <property type="project" value="UniProtKB"/>
</dbReference>
<dbReference type="GO" id="GO:0060999">
    <property type="term" value="P:positive regulation of dendritic spine development"/>
    <property type="evidence" value="ECO:0007669"/>
    <property type="project" value="Ensembl"/>
</dbReference>
<dbReference type="GO" id="GO:0010595">
    <property type="term" value="P:positive regulation of endothelial cell migration"/>
    <property type="evidence" value="ECO:0000315"/>
    <property type="project" value="BHF-UCL"/>
</dbReference>
<dbReference type="GO" id="GO:0051894">
    <property type="term" value="P:positive regulation of focal adhesion assembly"/>
    <property type="evidence" value="ECO:0000314"/>
    <property type="project" value="UniProtKB"/>
</dbReference>
<dbReference type="GO" id="GO:0035774">
    <property type="term" value="P:positive regulation of insulin secretion involved in cellular response to glucose stimulus"/>
    <property type="evidence" value="ECO:0007669"/>
    <property type="project" value="Ensembl"/>
</dbReference>
<dbReference type="GO" id="GO:0010592">
    <property type="term" value="P:positive regulation of lamellipodium assembly"/>
    <property type="evidence" value="ECO:0000314"/>
    <property type="project" value="MGI"/>
</dbReference>
<dbReference type="GO" id="GO:0031116">
    <property type="term" value="P:positive regulation of microtubule polymerization"/>
    <property type="evidence" value="ECO:0000315"/>
    <property type="project" value="CAFA"/>
</dbReference>
<dbReference type="GO" id="GO:0090023">
    <property type="term" value="P:positive regulation of neutrophil chemotaxis"/>
    <property type="evidence" value="ECO:0000315"/>
    <property type="project" value="UniProtKB"/>
</dbReference>
<dbReference type="GO" id="GO:2000386">
    <property type="term" value="P:positive regulation of ovarian follicle development"/>
    <property type="evidence" value="ECO:0007669"/>
    <property type="project" value="Ensembl"/>
</dbReference>
<dbReference type="GO" id="GO:0051897">
    <property type="term" value="P:positive regulation of phosphatidylinositol 3-kinase/protein kinase B signal transduction"/>
    <property type="evidence" value="ECO:0007669"/>
    <property type="project" value="Ensembl"/>
</dbReference>
<dbReference type="GO" id="GO:0001934">
    <property type="term" value="P:positive regulation of protein phosphorylation"/>
    <property type="evidence" value="ECO:0000315"/>
    <property type="project" value="UniProtKB"/>
</dbReference>
<dbReference type="GO" id="GO:0035025">
    <property type="term" value="P:positive regulation of Rho protein signal transduction"/>
    <property type="evidence" value="ECO:0000304"/>
    <property type="project" value="UniProtKB"/>
</dbReference>
<dbReference type="GO" id="GO:1900029">
    <property type="term" value="P:positive regulation of ruffle assembly"/>
    <property type="evidence" value="ECO:0000314"/>
    <property type="project" value="MGI"/>
</dbReference>
<dbReference type="GO" id="GO:1904395">
    <property type="term" value="P:positive regulation of skeletal muscle acetylcholine-gated channel clustering"/>
    <property type="evidence" value="ECO:0007669"/>
    <property type="project" value="Ensembl"/>
</dbReference>
<dbReference type="GO" id="GO:0051496">
    <property type="term" value="P:positive regulation of stress fiber assembly"/>
    <property type="evidence" value="ECO:0000314"/>
    <property type="project" value="UniProtKB"/>
</dbReference>
<dbReference type="GO" id="GO:1900026">
    <property type="term" value="P:positive regulation of substrate adhesion-dependent cell spreading"/>
    <property type="evidence" value="ECO:0000314"/>
    <property type="project" value="UniProtKB"/>
</dbReference>
<dbReference type="GO" id="GO:0072659">
    <property type="term" value="P:protein localization to plasma membrane"/>
    <property type="evidence" value="ECO:0007669"/>
    <property type="project" value="Ensembl"/>
</dbReference>
<dbReference type="GO" id="GO:0016601">
    <property type="term" value="P:Rac protein signal transduction"/>
    <property type="evidence" value="ECO:0000318"/>
    <property type="project" value="GO_Central"/>
</dbReference>
<dbReference type="GO" id="GO:0032956">
    <property type="term" value="P:regulation of actin cytoskeleton organization"/>
    <property type="evidence" value="ECO:0000318"/>
    <property type="project" value="GO_Central"/>
</dbReference>
<dbReference type="GO" id="GO:0061344">
    <property type="term" value="P:regulation of cell adhesion involved in heart morphogenesis"/>
    <property type="evidence" value="ECO:0007669"/>
    <property type="project" value="Ensembl"/>
</dbReference>
<dbReference type="GO" id="GO:0030334">
    <property type="term" value="P:regulation of cell migration"/>
    <property type="evidence" value="ECO:0000315"/>
    <property type="project" value="UniProtKB"/>
</dbReference>
<dbReference type="GO" id="GO:0008360">
    <property type="term" value="P:regulation of cell shape"/>
    <property type="evidence" value="ECO:0000318"/>
    <property type="project" value="GO_Central"/>
</dbReference>
<dbReference type="GO" id="GO:0008361">
    <property type="term" value="P:regulation of cell size"/>
    <property type="evidence" value="ECO:0000315"/>
    <property type="project" value="UniProtKB"/>
</dbReference>
<dbReference type="GO" id="GO:0070376">
    <property type="term" value="P:regulation of ERK5 cascade"/>
    <property type="evidence" value="ECO:0007669"/>
    <property type="project" value="Ensembl"/>
</dbReference>
<dbReference type="GO" id="GO:0010310">
    <property type="term" value="P:regulation of hydrogen peroxide metabolic process"/>
    <property type="evidence" value="ECO:0000304"/>
    <property type="project" value="BHF-UCL"/>
</dbReference>
<dbReference type="GO" id="GO:0010591">
    <property type="term" value="P:regulation of lamellipodium assembly"/>
    <property type="evidence" value="ECO:0000316"/>
    <property type="project" value="CAFA"/>
</dbReference>
<dbReference type="GO" id="GO:0014041">
    <property type="term" value="P:regulation of neuron maturation"/>
    <property type="evidence" value="ECO:0007669"/>
    <property type="project" value="Ensembl"/>
</dbReference>
<dbReference type="GO" id="GO:2001222">
    <property type="term" value="P:regulation of neuron migration"/>
    <property type="evidence" value="ECO:0007669"/>
    <property type="project" value="Ensembl"/>
</dbReference>
<dbReference type="GO" id="GO:0048168">
    <property type="term" value="P:regulation of neuronal synaptic plasticity"/>
    <property type="evidence" value="ECO:0007669"/>
    <property type="project" value="Ensembl"/>
</dbReference>
<dbReference type="GO" id="GO:1902622">
    <property type="term" value="P:regulation of neutrophil migration"/>
    <property type="evidence" value="ECO:0000318"/>
    <property type="project" value="GO_Central"/>
</dbReference>
<dbReference type="GO" id="GO:0045428">
    <property type="term" value="P:regulation of nitric oxide biosynthetic process"/>
    <property type="evidence" value="ECO:0000250"/>
    <property type="project" value="ARUK-UCL"/>
</dbReference>
<dbReference type="GO" id="GO:0150052">
    <property type="term" value="P:regulation of postsynapse assembly"/>
    <property type="evidence" value="ECO:0007669"/>
    <property type="project" value="Ensembl"/>
</dbReference>
<dbReference type="GO" id="GO:0046425">
    <property type="term" value="P:regulation of receptor signaling pathway via JAK-STAT"/>
    <property type="evidence" value="ECO:0007669"/>
    <property type="project" value="Ensembl"/>
</dbReference>
<dbReference type="GO" id="GO:0060263">
    <property type="term" value="P:regulation of respiratory burst"/>
    <property type="evidence" value="ECO:0000314"/>
    <property type="project" value="BHF-UCL"/>
</dbReference>
<dbReference type="GO" id="GO:0051492">
    <property type="term" value="P:regulation of stress fiber assembly"/>
    <property type="evidence" value="ECO:0000316"/>
    <property type="project" value="CAFA"/>
</dbReference>
<dbReference type="GO" id="GO:1900242">
    <property type="term" value="P:regulation of synaptic vesicle endocytosis"/>
    <property type="evidence" value="ECO:0007669"/>
    <property type="project" value="Ensembl"/>
</dbReference>
<dbReference type="GO" id="GO:0045730">
    <property type="term" value="P:respiratory burst"/>
    <property type="evidence" value="ECO:0000303"/>
    <property type="project" value="ComplexPortal"/>
</dbReference>
<dbReference type="GO" id="GO:0032496">
    <property type="term" value="P:response to lipopolysaccharide"/>
    <property type="evidence" value="ECO:0007669"/>
    <property type="project" value="Ensembl"/>
</dbReference>
<dbReference type="GO" id="GO:0009611">
    <property type="term" value="P:response to wounding"/>
    <property type="evidence" value="ECO:0000304"/>
    <property type="project" value="ProtInc"/>
</dbReference>
<dbReference type="GO" id="GO:0097178">
    <property type="term" value="P:ruffle assembly"/>
    <property type="evidence" value="ECO:0000315"/>
    <property type="project" value="UniProtKB"/>
</dbReference>
<dbReference type="GO" id="GO:0031529">
    <property type="term" value="P:ruffle organization"/>
    <property type="evidence" value="ECO:0000304"/>
    <property type="project" value="UniProtKB"/>
</dbReference>
<dbReference type="GO" id="GO:0071526">
    <property type="term" value="P:semaphorin-plexin signaling pathway"/>
    <property type="evidence" value="ECO:0000250"/>
    <property type="project" value="UniProtKB"/>
</dbReference>
<dbReference type="GO" id="GO:0007264">
    <property type="term" value="P:small GTPase-mediated signal transduction"/>
    <property type="evidence" value="ECO:0000315"/>
    <property type="project" value="BHF-UCL"/>
</dbReference>
<dbReference type="GO" id="GO:0003376">
    <property type="term" value="P:sphingosine-1-phosphate receptor signaling pathway"/>
    <property type="evidence" value="ECO:0000315"/>
    <property type="project" value="BHF-UCL"/>
</dbReference>
<dbReference type="GO" id="GO:0034446">
    <property type="term" value="P:substrate adhesion-dependent cell spreading"/>
    <property type="evidence" value="ECO:0000315"/>
    <property type="project" value="UniProtKB"/>
</dbReference>
<dbReference type="GO" id="GO:0042554">
    <property type="term" value="P:superoxide anion generation"/>
    <property type="evidence" value="ECO:0000314"/>
    <property type="project" value="UniProtKB"/>
</dbReference>
<dbReference type="GO" id="GO:0051932">
    <property type="term" value="P:synaptic transmission, GABAergic"/>
    <property type="evidence" value="ECO:0007669"/>
    <property type="project" value="Ensembl"/>
</dbReference>
<dbReference type="GO" id="GO:0060071">
    <property type="term" value="P:Wnt signaling pathway, planar cell polarity pathway"/>
    <property type="evidence" value="ECO:0000303"/>
    <property type="project" value="ParkinsonsUK-UCL"/>
</dbReference>
<dbReference type="CDD" id="cd01871">
    <property type="entry name" value="Rac1_like"/>
    <property type="match status" value="1"/>
</dbReference>
<dbReference type="FunFam" id="3.40.50.300:FF:000088">
    <property type="entry name" value="Ras-related C3 botulinum toxin substrate 1"/>
    <property type="match status" value="1"/>
</dbReference>
<dbReference type="Gene3D" id="3.40.50.300">
    <property type="entry name" value="P-loop containing nucleotide triphosphate hydrolases"/>
    <property type="match status" value="1"/>
</dbReference>
<dbReference type="IDEAL" id="IID00312"/>
<dbReference type="InterPro" id="IPR027417">
    <property type="entry name" value="P-loop_NTPase"/>
</dbReference>
<dbReference type="InterPro" id="IPR005225">
    <property type="entry name" value="Small_GTP-bd"/>
</dbReference>
<dbReference type="InterPro" id="IPR001806">
    <property type="entry name" value="Small_GTPase"/>
</dbReference>
<dbReference type="InterPro" id="IPR003578">
    <property type="entry name" value="Small_GTPase_Rho"/>
</dbReference>
<dbReference type="NCBIfam" id="TIGR00231">
    <property type="entry name" value="small_GTP"/>
    <property type="match status" value="1"/>
</dbReference>
<dbReference type="PANTHER" id="PTHR24072">
    <property type="entry name" value="RHO FAMILY GTPASE"/>
    <property type="match status" value="1"/>
</dbReference>
<dbReference type="Pfam" id="PF00071">
    <property type="entry name" value="Ras"/>
    <property type="match status" value="1"/>
</dbReference>
<dbReference type="PRINTS" id="PR00449">
    <property type="entry name" value="RASTRNSFRMNG"/>
</dbReference>
<dbReference type="SMART" id="SM00175">
    <property type="entry name" value="RAB"/>
    <property type="match status" value="1"/>
</dbReference>
<dbReference type="SMART" id="SM00173">
    <property type="entry name" value="RAS"/>
    <property type="match status" value="1"/>
</dbReference>
<dbReference type="SMART" id="SM00174">
    <property type="entry name" value="RHO"/>
    <property type="match status" value="1"/>
</dbReference>
<dbReference type="SUPFAM" id="SSF52540">
    <property type="entry name" value="P-loop containing nucleoside triphosphate hydrolases"/>
    <property type="match status" value="1"/>
</dbReference>
<dbReference type="PROSITE" id="PS51420">
    <property type="entry name" value="RHO"/>
    <property type="match status" value="1"/>
</dbReference>
<accession>P63000</accession>
<accession>O95501</accession>
<accession>P15154</accession>
<accession>Q3Y4D3</accession>
<accession>Q5JAA8</accession>
<accession>Q9BTB4</accession>
<reference key="1">
    <citation type="journal article" date="1989" name="J. Biol. Chem.">
        <title>Rac, a novel ras-related family of proteins that are botulinum toxin substrates.</title>
        <authorList>
            <person name="Didsbury J."/>
            <person name="Weber R.F."/>
            <person name="Bokoch G.M."/>
            <person name="Evans T."/>
            <person name="Snyderman R."/>
        </authorList>
    </citation>
    <scope>NUCLEOTIDE SEQUENCE [MRNA] (ISOFORM A)</scope>
</reference>
<reference key="2">
    <citation type="journal article" date="1990" name="Mol. Cell. Biol.">
        <title>Characterization of four novel ras-like genes expressed in a human teratocarcinoma cell line.</title>
        <authorList>
            <person name="Drivas G.T."/>
            <person name="Shih A."/>
            <person name="Coutavas E."/>
            <person name="Rush M.G."/>
            <person name="D'Eustachio P."/>
        </authorList>
    </citation>
    <scope>NUCLEOTIDE SEQUENCE [MRNA] (ISOFORM A)</scope>
</reference>
<reference key="3">
    <citation type="journal article" date="2000" name="Biochem. Biophys. Res. Commun.">
        <title>Small GTPase Rac1: structure, localization, and expression of the human gene.</title>
        <authorList>
            <person name="Matos P."/>
            <person name="Skaug J."/>
            <person name="Marques B."/>
            <person name="Beck S."/>
            <person name="Verissimo F."/>
            <person name="Gespach C."/>
            <person name="Boavida M.G."/>
            <person name="Scherer S.W."/>
            <person name="Jordan P."/>
        </authorList>
    </citation>
    <scope>NUCLEOTIDE SEQUENCE [GENOMIC DNA / MRNA] (ISOFORMS A AND B)</scope>
</reference>
<reference key="4">
    <citation type="journal article" date="1999" name="Oncogene">
        <title>Cloning of a novel human Rac1b splice variant with increased expression in colorectal tumors.</title>
        <authorList>
            <person name="Jordan P."/>
            <person name="Brazao R."/>
            <person name="Boavida M.G."/>
            <person name="Gespach C."/>
            <person name="Chastre E."/>
        </authorList>
    </citation>
    <scope>NUCLEOTIDE SEQUENCE [MRNA] (ISOFORMS A AND B)</scope>
    <source>
        <tissue>Colon</tissue>
        <tissue>Skin</tissue>
    </source>
</reference>
<reference key="5">
    <citation type="submission" date="1999-03" db="EMBL/GenBank/DDBJ databases">
        <title>Mutations and altered expression of Rac1 in human breast cancer -- characterization of a new Rac1 isoform, Rac1ins.</title>
        <authorList>
            <person name="Schnelzer A."/>
            <person name="Knaus U."/>
            <person name="Prechtel D."/>
            <person name="Dehne K."/>
            <person name="Harbeck N."/>
            <person name="Gerhard M."/>
            <person name="Schmitt M."/>
            <person name="Lengyel E."/>
        </authorList>
    </citation>
    <scope>NUCLEOTIDE SEQUENCE [MRNA] (ISOFORM B)</scope>
</reference>
<reference key="6">
    <citation type="submission" date="2003-04" db="EMBL/GenBank/DDBJ databases">
        <title>Identification of a human migration-inducing gene.</title>
        <authorList>
            <person name="Kim J.W."/>
        </authorList>
    </citation>
    <scope>NUCLEOTIDE SEQUENCE [LARGE SCALE MRNA] (ISOFORM A)</scope>
</reference>
<reference key="7">
    <citation type="submission" date="2002-04" db="EMBL/GenBank/DDBJ databases">
        <title>cDNA clones of human proteins involved in signal transduction sequenced by the Guthrie cDNA resource center (www.cdna.org).</title>
        <authorList>
            <person name="Puhl H.L. III"/>
            <person name="Ikeda S.R."/>
            <person name="Aronstam R.S."/>
        </authorList>
    </citation>
    <scope>NUCLEOTIDE SEQUENCE [LARGE SCALE MRNA] (ISOFORM A)</scope>
    <scope>VARIANT ILE-135</scope>
</reference>
<reference key="8">
    <citation type="submission" date="2003-05" db="EMBL/GenBank/DDBJ databases">
        <title>Cloning of human full-length CDSs in BD Creator(TM) system donor vector.</title>
        <authorList>
            <person name="Kalnine N."/>
            <person name="Chen X."/>
            <person name="Rolfs A."/>
            <person name="Halleck A."/>
            <person name="Hines L."/>
            <person name="Eisenstein S."/>
            <person name="Koundinya M."/>
            <person name="Raphael J."/>
            <person name="Moreira D."/>
            <person name="Kelley T."/>
            <person name="LaBaer J."/>
            <person name="Lin Y."/>
            <person name="Phelan M."/>
            <person name="Farmer A."/>
        </authorList>
    </citation>
    <scope>NUCLEOTIDE SEQUENCE [LARGE SCALE MRNA] (ISOFORM A)</scope>
</reference>
<reference key="9">
    <citation type="submission" date="2005-08" db="EMBL/GenBank/DDBJ databases">
        <authorList>
            <consortium name="NIEHS SNPs program"/>
        </authorList>
    </citation>
    <scope>NUCLEOTIDE SEQUENCE [GENOMIC DNA]</scope>
</reference>
<reference key="10">
    <citation type="journal article" date="2003" name="Nature">
        <title>The DNA sequence of human chromosome 7.</title>
        <authorList>
            <person name="Hillier L.W."/>
            <person name="Fulton R.S."/>
            <person name="Fulton L.A."/>
            <person name="Graves T.A."/>
            <person name="Pepin K.H."/>
            <person name="Wagner-McPherson C."/>
            <person name="Layman D."/>
            <person name="Maas J."/>
            <person name="Jaeger S."/>
            <person name="Walker R."/>
            <person name="Wylie K."/>
            <person name="Sekhon M."/>
            <person name="Becker M.C."/>
            <person name="O'Laughlin M.D."/>
            <person name="Schaller M.E."/>
            <person name="Fewell G.A."/>
            <person name="Delehaunty K.D."/>
            <person name="Miner T.L."/>
            <person name="Nash W.E."/>
            <person name="Cordes M."/>
            <person name="Du H."/>
            <person name="Sun H."/>
            <person name="Edwards J."/>
            <person name="Bradshaw-Cordum H."/>
            <person name="Ali J."/>
            <person name="Andrews S."/>
            <person name="Isak A."/>
            <person name="Vanbrunt A."/>
            <person name="Nguyen C."/>
            <person name="Du F."/>
            <person name="Lamar B."/>
            <person name="Courtney L."/>
            <person name="Kalicki J."/>
            <person name="Ozersky P."/>
            <person name="Bielicki L."/>
            <person name="Scott K."/>
            <person name="Holmes A."/>
            <person name="Harkins R."/>
            <person name="Harris A."/>
            <person name="Strong C.M."/>
            <person name="Hou S."/>
            <person name="Tomlinson C."/>
            <person name="Dauphin-Kohlberg S."/>
            <person name="Kozlowicz-Reilly A."/>
            <person name="Leonard S."/>
            <person name="Rohlfing T."/>
            <person name="Rock S.M."/>
            <person name="Tin-Wollam A.-M."/>
            <person name="Abbott A."/>
            <person name="Minx P."/>
            <person name="Maupin R."/>
            <person name="Strowmatt C."/>
            <person name="Latreille P."/>
            <person name="Miller N."/>
            <person name="Johnson D."/>
            <person name="Murray J."/>
            <person name="Woessner J.P."/>
            <person name="Wendl M.C."/>
            <person name="Yang S.-P."/>
            <person name="Schultz B.R."/>
            <person name="Wallis J.W."/>
            <person name="Spieth J."/>
            <person name="Bieri T.A."/>
            <person name="Nelson J.O."/>
            <person name="Berkowicz N."/>
            <person name="Wohldmann P.E."/>
            <person name="Cook L.L."/>
            <person name="Hickenbotham M.T."/>
            <person name="Eldred J."/>
            <person name="Williams D."/>
            <person name="Bedell J.A."/>
            <person name="Mardis E.R."/>
            <person name="Clifton S.W."/>
            <person name="Chissoe S.L."/>
            <person name="Marra M.A."/>
            <person name="Raymond C."/>
            <person name="Haugen E."/>
            <person name="Gillett W."/>
            <person name="Zhou Y."/>
            <person name="James R."/>
            <person name="Phelps K."/>
            <person name="Iadanoto S."/>
            <person name="Bubb K."/>
            <person name="Simms E."/>
            <person name="Levy R."/>
            <person name="Clendenning J."/>
            <person name="Kaul R."/>
            <person name="Kent W.J."/>
            <person name="Furey T.S."/>
            <person name="Baertsch R.A."/>
            <person name="Brent M.R."/>
            <person name="Keibler E."/>
            <person name="Flicek P."/>
            <person name="Bork P."/>
            <person name="Suyama M."/>
            <person name="Bailey J.A."/>
            <person name="Portnoy M.E."/>
            <person name="Torrents D."/>
            <person name="Chinwalla A.T."/>
            <person name="Gish W.R."/>
            <person name="Eddy S.R."/>
            <person name="McPherson J.D."/>
            <person name="Olson M.V."/>
            <person name="Eichler E.E."/>
            <person name="Green E.D."/>
            <person name="Waterston R.H."/>
            <person name="Wilson R.K."/>
        </authorList>
    </citation>
    <scope>NUCLEOTIDE SEQUENCE [LARGE SCALE GENOMIC DNA]</scope>
</reference>
<reference key="11">
    <citation type="journal article" date="2004" name="Genome Res.">
        <title>The status, quality, and expansion of the NIH full-length cDNA project: the Mammalian Gene Collection (MGC).</title>
        <authorList>
            <consortium name="The MGC Project Team"/>
        </authorList>
    </citation>
    <scope>NUCLEOTIDE SEQUENCE [LARGE SCALE MRNA] (ISOFORM A)</scope>
    <source>
        <tissue>Pancreas</tissue>
        <tissue>Skin</tissue>
    </source>
</reference>
<reference key="12">
    <citation type="journal article" date="1991" name="J. Biol. Chem.">
        <title>Carboxyl-terminal isoprenylation of ras-related GTP-binding proteins encoded by rac1, rac2, and ralA.</title>
        <authorList>
            <person name="Kinsella B.T."/>
            <person name="Erdman R.A."/>
            <person name="Maltese W.A."/>
        </authorList>
    </citation>
    <scope>SUBCELLULAR LOCATION</scope>
    <scope>ISOPRENYLATION AT CYS-189</scope>
</reference>
<reference key="13">
    <citation type="journal article" date="1992" name="Cell">
        <title>The small GTP-binding protein rac regulates growth factor-induced membrane ruffling.</title>
        <authorList>
            <person name="Ridley A.J."/>
            <person name="Paterson H.F."/>
            <person name="Johnston C.L."/>
            <person name="Diekmann D."/>
            <person name="Hall A."/>
        </authorList>
    </citation>
    <scope>FUNCTION</scope>
    <scope>SUBCELLULAR LOCATION</scope>
</reference>
<reference key="14">
    <citation type="journal article" date="1995" name="Nature">
        <title>Glucosylation of Rho proteins by Clostridium difficile toxin B.</title>
        <authorList>
            <person name="Just I."/>
            <person name="Selzer J."/>
            <person name="Wilm M."/>
            <person name="von Eichel-Streiber C."/>
            <person name="Mann M."/>
            <person name="Aktories K."/>
        </authorList>
    </citation>
    <scope>GLYCOSYLATION AT THR-35 (MICROBIAL INFECTION)</scope>
</reference>
<reference key="15">
    <citation type="journal article" date="1995" name="J. Biol. Chem.">
        <title>The enterotoxin from Clostridium difficile (ToxA) monoglucosylates the Rho proteins.</title>
        <authorList>
            <person name="Just I."/>
            <person name="Wilm M."/>
            <person name="Selzer J."/>
            <person name="Rex G."/>
            <person name="von Eichel-Streiber C."/>
            <person name="Mann M."/>
            <person name="Aktories K."/>
        </authorList>
    </citation>
    <scope>GLYCOSYLATION AT THR-35 (MICROBIAL INFECTION)</scope>
</reference>
<reference key="16">
    <citation type="journal article" date="1995" name="J. Biol. Chem.">
        <title>Bridging Ral GTPase to Rho pathways. RLIP76, a Ral effector with CDC42/Rac GTPase-activating protein activity.</title>
        <authorList>
            <person name="Jullien-Flores V."/>
            <person name="Dorseuil O."/>
            <person name="Romero F."/>
            <person name="Letourneur F."/>
            <person name="Saragosti S."/>
            <person name="Berger R."/>
            <person name="Tavitian A."/>
            <person name="Gacon G."/>
            <person name="Camonis J.H."/>
        </authorList>
    </citation>
    <scope>INTERACTION WITH RALBP1</scope>
</reference>
<reference key="17">
    <citation type="journal article" date="1996" name="J. Biol. Chem.">
        <title>Inactivation of Ras by Clostridium sordellii lethal toxin-catalyzed glucosylation.</title>
        <authorList>
            <person name="Just I."/>
            <person name="Selzer J."/>
            <person name="Hofmann F."/>
            <person name="Green G.A."/>
            <person name="Aktories K."/>
        </authorList>
    </citation>
    <scope>GLYCOSYLATION AT THR-35 (MICROBIAL INFECTION)</scope>
</reference>
<reference key="18">
    <citation type="journal article" date="1996" name="J. Biol. Chem.">
        <title>Clostridium novyi alpha-toxin-catalyzed incorporation of GlcNAc into Rho subfamily proteins.</title>
        <authorList>
            <person name="Selzer J."/>
            <person name="Hofmann F."/>
            <person name="Rex G."/>
            <person name="Wilm M."/>
            <person name="Mann M."/>
            <person name="Just I."/>
            <person name="Aktories K."/>
        </authorList>
    </citation>
    <scope>GLYCOSYLATION AT THR-35 (MICROBIAL INFECTION)</scope>
</reference>
<reference key="19">
    <citation type="journal article" date="1997" name="Mol. Cell. Biol.">
        <title>The PRK2 kinase is a potential effector target of both Rho and Rac GTPases and regulates actin cytoskeletal organization.</title>
        <authorList>
            <person name="Vincent S."/>
            <person name="Settleman J."/>
        </authorList>
    </citation>
    <scope>FUNCTION</scope>
    <scope>INTERACTION WITH PKN2</scope>
</reference>
<reference key="20">
    <citation type="journal article" date="1998" name="J. Biol. Chem.">
        <title>Cloning and characterization of GEF-H1, a microtubule-associated guanine nucleotide exchange factor for Rac and Rho GTPases.</title>
        <authorList>
            <person name="Ren Y."/>
            <person name="Li R."/>
            <person name="Zheng Y."/>
            <person name="Busch H."/>
        </authorList>
    </citation>
    <scope>INTERACTION WITH ARHGEF2</scope>
</reference>
<reference key="21">
    <citation type="journal article" date="1999" name="Biochim. Biophys. Acta">
        <title>Non-adherent cell-specific expression of DOCK2, a member of the human CDM-family proteins.</title>
        <authorList>
            <person name="Nishihara H."/>
            <person name="Kobayashi S."/>
            <person name="Hashimoto Y."/>
            <person name="Ohba F."/>
            <person name="Mochizuki N."/>
            <person name="Kurata T."/>
            <person name="Nagashima K."/>
            <person name="Matsuda M."/>
        </authorList>
    </citation>
    <scope>INTERACTION WITH DOCK2</scope>
</reference>
<reference key="22">
    <citation type="journal article" date="2000" name="J. Cell Sci.">
        <title>The mammalian homologue of the Caenorhabditis elegans polarity protein PAR-6 is a binding partner for the Rho GTPases Cdc42 and Rac1.</title>
        <authorList>
            <person name="Johansson A.-S."/>
            <person name="Driessens M."/>
            <person name="Aspenstroem P."/>
        </authorList>
    </citation>
    <scope>INTERACTION WITH PARD6A</scope>
    <scope>MUTAGENESIS OF GLN-61</scope>
</reference>
<reference key="23">
    <citation type="journal article" date="2000" name="Nature">
        <title>IRSp53 is an essential intermediate between Rac and WAVE in the regulation of membrane ruffling.</title>
        <authorList>
            <person name="Miki H."/>
            <person name="Yamaguchi H."/>
            <person name="Suetsugu S."/>
            <person name="Takenawa T."/>
        </authorList>
    </citation>
    <scope>INTERACTION WITH BAIAP2</scope>
</reference>
<reference key="24">
    <citation type="journal article" date="2000" name="Proc. Natl. Acad. Sci. U.S.A.">
        <title>The semaphorin receptor plexin-B1 specifically interacts with active Rac in a ligand-dependent manner.</title>
        <authorList>
            <person name="Vikis H.G."/>
            <person name="Li W."/>
            <person name="He Z."/>
            <person name="Guan K.-L."/>
        </authorList>
    </citation>
    <scope>INTERACTION WITH PLXNB1</scope>
</reference>
<reference key="25">
    <citation type="journal article" date="2000" name="J. Biol. Chem.">
        <title>Akt protein kinase inhibits Rac1-GTP binding through phosphorylation at serine 71 of Rac1.</title>
        <authorList>
            <person name="Kwon T."/>
            <person name="Kwon D.Y."/>
            <person name="Chun J."/>
            <person name="Kim J.H."/>
            <person name="Kang S.S."/>
        </authorList>
    </citation>
    <scope>PHOSPHORYLATION AT SER-71</scope>
    <scope>MUTAGENESIS OF SER-71</scope>
</reference>
<reference key="26">
    <citation type="journal article" date="2001" name="Genes Cells">
        <title>Human homologues of the Caenorhabditis elegans cell polarity protein PAR6 as an adaptor that links the small GTPases Rac and Cdc42 to atypical protein kinase C.</title>
        <authorList>
            <person name="Noda Y."/>
            <person name="Takeya R."/>
            <person name="Ohno S."/>
            <person name="Naito S."/>
            <person name="Ito T."/>
            <person name="Sumimoto H."/>
        </authorList>
    </citation>
    <scope>INTERACTION WITH PARD6A; PARD6B AND PARD6G; PRKCI AND PRKCZ</scope>
    <scope>MUTAGENESIS OF GLY-12 AND THR-17</scope>
</reference>
<reference key="27">
    <citation type="journal article" date="2002" name="Cell">
        <title>P-Rex1, a PtdIns(3,4,5)P3- and Gbetagamma-regulated guanine-nucleotide exchange factor for Rac.</title>
        <authorList>
            <person name="Welch H.C.E."/>
            <person name="Coadwell W.J."/>
            <person name="Ellson C.D."/>
            <person name="Ferguson G.J."/>
            <person name="Andrews S.R."/>
            <person name="Erdjument-Bromage H."/>
            <person name="Tempst P."/>
            <person name="Hawkins P.T."/>
            <person name="Stephens L.R."/>
        </authorList>
    </citation>
    <scope>ACTIVATION BY PREX1</scope>
</reference>
<reference key="28">
    <citation type="journal article" date="2002" name="J. Cell Biol.">
        <title>The integrin cytoplasmic domain-associated protein ICAP-1 binds and regulates Rho family GTPases during cell spreading.</title>
        <authorList>
            <person name="Degani S."/>
            <person name="Balzac F."/>
            <person name="Brancaccio M."/>
            <person name="Guazzone S."/>
            <person name="Retta S.F."/>
            <person name="Silengo L."/>
            <person name="Eva A."/>
            <person name="Tarone G."/>
        </authorList>
    </citation>
    <scope>INTERACTION WITH ITGB1BP1</scope>
</reference>
<reference key="29">
    <citation type="journal article" date="2002" name="Nat. Cell Biol.">
        <title>Unconventional Rac-GEF activity is mediated through the Dock180-ELMO complex.</title>
        <authorList>
            <person name="Brugnera E."/>
            <person name="Haney L."/>
            <person name="Grimsley C."/>
            <person name="Lu M."/>
            <person name="Walk S.F."/>
            <person name="Tosello-Trampont A.-C."/>
            <person name="Macara I.G."/>
            <person name="Madhani H."/>
            <person name="Fink G.R."/>
            <person name="Ravichandran K.S."/>
        </authorList>
    </citation>
    <scope>SUBUNIT OF A COMPLEX CONTAINING ELMO1 AND DOCK1</scope>
</reference>
<reference key="30">
    <citation type="journal article" date="2003" name="J. Biol. Chem.">
        <title>Novel mechanism of the co-regulation of nuclear transport of SmgGDS and Rac1.</title>
        <authorList>
            <person name="Lanning C.C."/>
            <person name="Ruiz-Velasco R."/>
            <person name="Williams C.L."/>
        </authorList>
    </citation>
    <scope>INTERACTION WITH RAP1GDS1</scope>
    <scope>SUBCELLULAR LOCATION</scope>
    <scope>POLYBASIC REGION</scope>
</reference>
<reference key="31">
    <citation type="journal article" date="2003" name="J. Biol. Chem.">
        <title>Novel human homologues of p47phox and p67phox participate in activation of superoxide-producing NADPH oxidases.</title>
        <authorList>
            <person name="Takeya R."/>
            <person name="Ueno N."/>
            <person name="Kami K."/>
            <person name="Taura M."/>
            <person name="Kohjima M."/>
            <person name="Izaki T."/>
            <person name="Nunoi H."/>
            <person name="Sumimoto H."/>
        </authorList>
    </citation>
    <scope>INTERACTION WITH NOXA1</scope>
</reference>
<reference key="32">
    <citation type="journal article" date="2003" name="J. Cell Biol.">
        <title>Synapse formation is regulated by the signaling adaptor GIT1.</title>
        <authorList>
            <person name="Zhang H."/>
            <person name="Webb D.J."/>
            <person name="Asmussen H."/>
            <person name="Horwitz A.F."/>
        </authorList>
    </citation>
    <scope>FUNCTION</scope>
</reference>
<reference key="33">
    <citation type="journal article" date="2003" name="Mol. Cell. Biol.">
        <title>The TRE17 oncogene encodes a component of a novel effector pathway for Rho GTPases Cdc42 and Rac1 and stimulates actin remodeling.</title>
        <authorList>
            <person name="Masuda-Robens J.M."/>
            <person name="Kutney S.N."/>
            <person name="Qi H."/>
            <person name="Chou M.M."/>
        </authorList>
    </citation>
    <scope>INTERACTION WITH USP6</scope>
</reference>
<reference key="34">
    <citation type="journal article" date="2004" name="J. Biol. Chem.">
        <title>The Down syndrome cell adhesion molecule (DSCAM) interacts with and activates Pak.</title>
        <authorList>
            <person name="Li W."/>
            <person name="Guan K.L."/>
        </authorList>
    </citation>
    <scope>RETRACTED PAPER</scope>
</reference>
<reference key="35">
    <citation type="journal article" date="2015" name="J. Biol. Chem.">
        <title>The Down syndrome cell adhesion molecule (DSCAM) interacts with and activates Pak.</title>
        <authorList>
            <person name="Li W."/>
            <person name="Guan K.L."/>
        </authorList>
    </citation>
    <scope>RETRACTION NOTICE OF PUBMED:15169762</scope>
</reference>
<reference key="36">
    <citation type="journal article" date="2005" name="FASEB J.">
        <title>The arachidonic acid-binding protein S100A8/A9 promotes NADPH oxidase activation by interaction with p67phox and Rac-2.</title>
        <authorList>
            <person name="Kerkhoff C."/>
            <person name="Nacken W."/>
            <person name="Benedyk M."/>
            <person name="Dagher M.C."/>
            <person name="Sopalla C."/>
            <person name="Doussiere J."/>
        </authorList>
    </citation>
    <scope>INTERACTION WITH S100A8 AND CALPROTECTIN</scope>
</reference>
<reference key="37">
    <citation type="journal article" date="2006" name="J. Mol. Biol.">
        <title>An isoform of GTPase regulator DOCK4 localizes to the stereocilia in the inner ear and binds to harmonin (USH1C).</title>
        <authorList>
            <person name="Yan D."/>
            <person name="Li F."/>
            <person name="Hall M.L."/>
            <person name="Sage C."/>
            <person name="Hu W.H."/>
            <person name="Giallourakis C."/>
            <person name="Upadhyay G."/>
            <person name="Ouyang X.M."/>
            <person name="Du L.L."/>
            <person name="Bethea J.R."/>
            <person name="Chen Z.Y."/>
            <person name="Yajnik V."/>
            <person name="Liu X.Z."/>
        </authorList>
    </citation>
    <scope>INTERACTION WITH DOCK4</scope>
</reference>
<reference key="38">
    <citation type="journal article" date="2006" name="J. Proteome Res.">
        <title>Proteomic and bioinformatic characterization of the biogenesis and function of melanosomes.</title>
        <authorList>
            <person name="Chi A."/>
            <person name="Valencia J.C."/>
            <person name="Hu Z.-Z."/>
            <person name="Watabe H."/>
            <person name="Yamaguchi H."/>
            <person name="Mangini N.J."/>
            <person name="Huang H."/>
            <person name="Canfield V.A."/>
            <person name="Cheng K.C."/>
            <person name="Yang F."/>
            <person name="Abe R."/>
            <person name="Yamagishi S."/>
            <person name="Shabanowitz J."/>
            <person name="Hearing V.J."/>
            <person name="Wu C."/>
            <person name="Appella E."/>
            <person name="Hunt D.F."/>
        </authorList>
    </citation>
    <scope>SUBCELLULAR LOCATION [LARGE SCALE ANALYSIS]</scope>
    <source>
        <tissue>Melanoma</tissue>
    </source>
</reference>
<reference key="39">
    <citation type="journal article" date="2006" name="Neuron">
        <title>The Rac activator DOCK7 regulates neuronal polarity through local phosphorylation of stathmin/Op18.</title>
        <authorList>
            <person name="Watabe-Uchida M."/>
            <person name="John K.A."/>
            <person name="Janas J.A."/>
            <person name="Newey S.E."/>
            <person name="Van Aelst L."/>
        </authorList>
    </citation>
    <scope>INTERACTION WITH DOCK7</scope>
</reference>
<reference key="40">
    <citation type="journal article" date="2007" name="J. Biol. Chem.">
        <title>Cooperation of DEF6 with activated Rac in regulating cell morphology.</title>
        <authorList>
            <person name="Oka T."/>
            <person name="Ihara S."/>
            <person name="Fukui Y."/>
        </authorList>
    </citation>
    <scope>INTERACTION WITH DEF6</scope>
    <scope>DOMAIN</scope>
</reference>
<reference key="41">
    <citation type="journal article" date="2007" name="J. Cell Sci.">
        <title>Characterisation of IRTKS, a novel IRSp53/MIM family actin regulator with distinct filament bundling properties.</title>
        <authorList>
            <person name="Millard T.H."/>
            <person name="Dawson J."/>
            <person name="Machesky L.M."/>
        </authorList>
    </citation>
    <scope>INTERACTION WITH BAIAP2L1</scope>
</reference>
<reference key="42">
    <citation type="journal article" date="2007" name="Mol. Cell. Biol.">
        <title>Asef2 functions as a Cdc42 exchange factor and is stimulated by the release of an autoinhibitory module from a concealed C-terminal activation element.</title>
        <authorList>
            <person name="Hamann M.J."/>
            <person name="Lubking C.M."/>
            <person name="Luchini D.N."/>
            <person name="Billadeau D.D."/>
        </authorList>
    </citation>
    <scope>INTERACTION WITH SPATA13</scope>
</reference>
<reference key="43">
    <citation type="journal article" date="2008" name="Curr. Biol.">
        <title>CED-10/Rac1 mediates axon guidance by regulating the asymmetric distribution of MIG-10/lamellipodin.</title>
        <authorList>
            <person name="Quinn C.C."/>
            <person name="Pfeil D.S."/>
            <person name="Wadsworth W.G."/>
        </authorList>
    </citation>
    <scope>INTERACTION WITH RAPH1</scope>
    <scope>MUTAGENESIS OF GLN-61</scope>
</reference>
<reference key="44">
    <citation type="journal article" date="2008" name="FEBS J.">
        <title>Activated Rac1, but not the tumorigenic variant Rac1b, is ubiquitinated on Lys 147 through a JNK-regulated process.</title>
        <authorList>
            <person name="Visvikis O."/>
            <person name="Lores P."/>
            <person name="Boyer L."/>
            <person name="Chardin P."/>
            <person name="Lemichez E."/>
            <person name="Gacon G."/>
        </authorList>
    </citation>
    <scope>UBIQUITINATION AT LYS-147</scope>
</reference>
<reference key="45">
    <citation type="journal article" date="2008" name="Nat. Med.">
        <title>Modification of mineralocorticoid receptor function by Rac1 GTPase: implication in proteinuric kidney disease.</title>
        <authorList>
            <person name="Shibata S."/>
            <person name="Nagase M."/>
            <person name="Yoshida S."/>
            <person name="Kawarazaki W."/>
            <person name="Kurihara H."/>
            <person name="Tanaka H."/>
            <person name="Miyoshi J."/>
            <person name="Takai Y."/>
            <person name="Fujita T."/>
        </authorList>
    </citation>
    <scope>FUNCTION</scope>
    <scope>MUTAGENESIS OF GLY-12 AND THR-17</scope>
</reference>
<reference key="46">
    <citation type="journal article" date="2008" name="Proc. Natl. Acad. Sci. U.S.A.">
        <title>A quantitative atlas of mitotic phosphorylation.</title>
        <authorList>
            <person name="Dephoure N."/>
            <person name="Zhou C."/>
            <person name="Villen J."/>
            <person name="Beausoleil S.A."/>
            <person name="Bakalarski C.E."/>
            <person name="Elledge S.J."/>
            <person name="Gygi S.P."/>
        </authorList>
    </citation>
    <scope>PHOSPHORYLATION [LARGE SCALE ANALYSIS] AT SER-71 (ISOFORM B)</scope>
    <scope>IDENTIFICATION BY MASS SPECTROMETRY [LARGE SCALE ANALYSIS]</scope>
    <source>
        <tissue>Cervix carcinoma</tissue>
    </source>
</reference>
<reference key="47">
    <citation type="journal article" date="2009" name="FEBS Lett.">
        <title>Distinct kinetics of (H/K/N)Ras glucosylation and Rac1 glucosylation catalysed by Clostridium sordellii lethal toxin.</title>
        <authorList>
            <person name="Huelsenbeck S.C."/>
            <person name="Klose I."/>
            <person name="Reichenbach M."/>
            <person name="Huelsenbeck J."/>
            <person name="Genth H."/>
        </authorList>
    </citation>
    <scope>GLYCOSYLATION AT THR-35 (MICROBIAL INFECTION)</scope>
</reference>
<reference key="48">
    <citation type="journal article" date="2009" name="J. Cell Sci.">
        <title>The Rho-family GEF Asef2 activates Rac to modulate adhesion and actin dynamics and thereby regulate cell migration.</title>
        <authorList>
            <person name="Bristow J.M."/>
            <person name="Sellers M.H."/>
            <person name="Majumdar D."/>
            <person name="Anderson B."/>
            <person name="Hu L."/>
            <person name="Webb D.J."/>
        </authorList>
    </citation>
    <scope>FUNCTION</scope>
</reference>
<reference key="49">
    <citation type="journal article" date="2010" name="Biochem. Biophys. Res. Commun.">
        <title>Abba promotes PDGF-mediated membrane ruffling through activation of the small GTPase Rac1.</title>
        <authorList>
            <person name="Zheng D."/>
            <person name="Niu S."/>
            <person name="Yu D."/>
            <person name="Zhan X.H."/>
            <person name="Zeng X."/>
            <person name="Cui B."/>
            <person name="Chen Y."/>
            <person name="Yoon J."/>
            <person name="Martin S.S."/>
            <person name="Lu X."/>
            <person name="Zhan X."/>
        </authorList>
    </citation>
    <scope>INTERACTION WITH MTSS2</scope>
</reference>
<reference key="50">
    <citation type="journal article" date="2010" name="FEBS J.">
        <title>The SWI/SNF protein BAF60b is ubiquitinated through a signalling process involving Rac GTPase and the RING finger protein Unkempt.</title>
        <authorList>
            <person name="Lores P."/>
            <person name="Visvikis O."/>
            <person name="Luna R."/>
            <person name="Lemichez E."/>
            <person name="Gacon G."/>
        </authorList>
    </citation>
    <scope>INTERACTION WITH UNKL</scope>
</reference>
<reference key="51">
    <citation type="journal article" date="2009" name="Mol. Biol. Cell">
        <title>BPAG1e maintains keratinocyte polarity through beta4 integrin-mediated modulation of Rac1 and cofilin activities.</title>
        <authorList>
            <person name="Hamill K.J."/>
            <person name="Hopkinson S.B."/>
            <person name="DeBiase P."/>
            <person name="Jones J.C."/>
        </authorList>
    </citation>
    <scope>FUNCTION</scope>
    <scope>INTERACTION WITH ITGB4</scope>
</reference>
<reference key="52">
    <citation type="journal article" date="2009" name="Mol. Cell">
        <title>The fic domain: regulation of cell signaling by adenylylation.</title>
        <authorList>
            <person name="Worby C.A."/>
            <person name="Mattoo S."/>
            <person name="Kruger R.P."/>
            <person name="Corbeil L.B."/>
            <person name="Koller A."/>
            <person name="Mendez J.C."/>
            <person name="Zekarias B."/>
            <person name="Lazar C."/>
            <person name="Dixon J.E."/>
        </authorList>
    </citation>
    <scope>AMPYLATION AT TYR-32 (MICROBIAL INFECTION)</scope>
    <scope>IDENTIFICATION BY MASS SPECTROMETRY</scope>
    <scope>MUTAGENESIS OF TYR-32</scope>
</reference>
<reference key="53">
    <citation type="journal article" date="2009" name="Science">
        <title>AMPylation of Rho GTPases by Vibrio VopS disrupts effector binding and downstream signaling.</title>
        <authorList>
            <person name="Yarbrough M.L."/>
            <person name="Li Y."/>
            <person name="Kinch L.N."/>
            <person name="Grishin N.V."/>
            <person name="Ball H.L."/>
            <person name="Orth K."/>
        </authorList>
    </citation>
    <scope>AMPYLATION AT THR-35 (MICROBIAL INFECTION)</scope>
    <scope>IDENTIFICATION BY MASS SPECTROMETRY</scope>
    <scope>MUTAGENESIS OF THR-35</scope>
</reference>
<reference key="54">
    <citation type="journal article" date="2010" name="Curr. Biol.">
        <title>Armus is a Rac1 effector that inactivates Rab7 and regulates E-cadherin degradation.</title>
        <authorList>
            <person name="Frasa M.A."/>
            <person name="Maximiano F.C."/>
            <person name="Smolarczyk K."/>
            <person name="Francis R.E."/>
            <person name="Betson M.E."/>
            <person name="Lozano E."/>
            <person name="Goldenring J."/>
            <person name="Seabra M.C."/>
            <person name="Rak A."/>
            <person name="Ahmadian M.R."/>
            <person name="Braga V.M."/>
        </authorList>
    </citation>
    <scope>INTERACTION WITH TBC1D2</scope>
</reference>
<reference key="55">
    <citation type="journal article" date="2010" name="FEBS Lett.">
        <title>POSH2 is a RING finger E3 ligase with Rac1 binding activity through a partial CRIB domain.</title>
        <authorList>
            <person name="Kaerkkaeinen S."/>
            <person name="van der Linden M."/>
            <person name="Renkema G.H."/>
        </authorList>
    </citation>
    <scope>INTERACTION WITH PAK2; SH3RF1 AND SH3RF3</scope>
</reference>
<reference key="56">
    <citation type="journal article" date="2010" name="J. Biol. Chem.">
        <title>Semaphorin 5A and plexin-B3 inhibit human glioma cell motility through RhoGDIalpha-mediated inactivation of Rac1 GTPase.</title>
        <authorList>
            <person name="Li X."/>
            <person name="Lee A.Y."/>
        </authorList>
    </citation>
    <scope>FUNCTION</scope>
</reference>
<reference key="57">
    <citation type="journal article" date="2010" name="J. Biol. Chem.">
        <title>Activated Rac1 GTPase translocates protein phosphatase 5 to the cell membrane and stimulates phosphatase activity in vitro.</title>
        <authorList>
            <person name="Chatterjee A."/>
            <person name="Wang L."/>
            <person name="Armstrong D.L."/>
            <person name="Rossie S."/>
        </authorList>
    </citation>
    <scope>FUNCTION</scope>
    <scope>INTERACTION WITH PPP5C</scope>
    <scope>SUBCELLULAR LOCATION</scope>
    <scope>MUTAGENESIS OF THR-17; GLY-30; THR-35 AND GLN-61</scope>
</reference>
<reference key="58">
    <citation type="journal article" date="2010" name="J. Biol. Chem.">
        <title>Splice variants of SmgGDS control small GTPase prenylation and membrane localization.</title>
        <authorList>
            <person name="Berg T.J."/>
            <person name="Gastonguay A.J."/>
            <person name="Lorimer E.L."/>
            <person name="Kuhnmuench J.R."/>
            <person name="Li R."/>
            <person name="Fields A.P."/>
            <person name="Williams C.L."/>
        </authorList>
    </citation>
    <scope>INTERACTION WITH RAP1GDS1</scope>
</reference>
<reference key="59">
    <citation type="journal article" date="2010" name="J. Cell Biol.">
        <title>Ephexin4 and EphA2 mediate cell migration through a RhoG-dependent mechanism.</title>
        <authorList>
            <person name="Hiramoto-Yamaki N."/>
            <person name="Takeuchi S."/>
            <person name="Ueda S."/>
            <person name="Harada K."/>
            <person name="Fujimoto S."/>
            <person name="Negishi M."/>
            <person name="Katoh H."/>
        </authorList>
    </citation>
    <scope>INTERACTION WITH ARHGEF16</scope>
</reference>
<reference key="60">
    <citation type="journal article" date="2011" name="BMC Syst. Biol.">
        <title>Initial characterization of the human central proteome.</title>
        <authorList>
            <person name="Burkard T.R."/>
            <person name="Planyavsky M."/>
            <person name="Kaupe I."/>
            <person name="Breitwieser F.P."/>
            <person name="Buerckstuemmer T."/>
            <person name="Bennett K.L."/>
            <person name="Superti-Furga G."/>
            <person name="Colinge J."/>
        </authorList>
    </citation>
    <scope>IDENTIFICATION BY MASS SPECTROMETRY [LARGE SCALE ANALYSIS]</scope>
</reference>
<reference key="61">
    <citation type="journal article" date="2011" name="Biochem. Biophys. Res. Commun.">
        <title>ARHGAP30 is a Wrch-1-interacting protein involved in actin dynamics and cell adhesion.</title>
        <authorList>
            <person name="Naji L."/>
            <person name="Pacholsky D."/>
            <person name="Aspenstrom P."/>
        </authorList>
    </citation>
    <scope>ACTIVITY REGULATION</scope>
    <scope>CATALYTIC ACTIVITY</scope>
</reference>
<reference key="62">
    <citation type="journal article" date="2011" name="Dev. Cell">
        <title>The E3 ubiquitin-ligase HACE1 catalyzes the ubiquitylation of active Rac1.</title>
        <authorList>
            <person name="Torrino S."/>
            <person name="Visvikis O."/>
            <person name="Doye A."/>
            <person name="Boyer L."/>
            <person name="Stefani C."/>
            <person name="Munro P."/>
            <person name="Bertoglio J."/>
            <person name="Gacon G."/>
            <person name="Mettouchi A."/>
            <person name="Lemichez E."/>
        </authorList>
    </citation>
    <scope>UBIQUITINATION</scope>
</reference>
<reference key="63">
    <citation type="journal article" date="2011" name="J. Cell Sci.">
        <title>The F-BAR domain protein PACSIN2 associates with Rac1 and regulates cell spreading and migration.</title>
        <authorList>
            <person name="de Kreuk B.J."/>
            <person name="Nethe M."/>
            <person name="Fernandez-Borja M."/>
            <person name="Anthony E.C."/>
            <person name="Hensbergen P.J."/>
            <person name="Deelder A.M."/>
            <person name="Plomann M."/>
            <person name="Hordijk P.L."/>
        </authorList>
    </citation>
    <scope>FUNCTION</scope>
    <scope>SUBCELLULAR LOCATION</scope>
    <scope>INTERACTION WITH PACSIN2</scope>
</reference>
<reference key="64">
    <citation type="journal article" date="2011" name="Mol. Cell. Biol.">
        <title>The Rho target PRK2 regulates apical junction formation in human bronchial epithelial cells.</title>
        <authorList>
            <person name="Wallace S.W."/>
            <person name="Magalhaes A."/>
            <person name="Hall A."/>
        </authorList>
    </citation>
    <scope>INTERACTION WITH PKN2</scope>
</reference>
<reference key="65">
    <citation type="journal article" date="2012" name="Exp. Cell Res.">
        <title>Desmoglein 3 acting as an upstream regulator of Rho GTPases, Rac-1/Cdc42 in the regulation of actin organisation and dynamics.</title>
        <authorList>
            <person name="Tsang S.M."/>
            <person name="Brown L."/>
            <person name="Gadmor H."/>
            <person name="Gammon L."/>
            <person name="Fortune F."/>
            <person name="Wheeler A."/>
            <person name="Wan H."/>
        </authorList>
    </citation>
    <scope>FUNCTION</scope>
    <scope>INTERACTION WITH DSG3</scope>
</reference>
<reference key="66">
    <citation type="journal article" date="2012" name="J. Biol. Chem.">
        <title>Tetraspanin CD151 stimulates adhesion-dependent activation of Ras, Rac, and Cdc42 by facilitating molecular association between beta1 integrins and small GTPases.</title>
        <authorList>
            <person name="Hong I.K."/>
            <person name="Jeoung D.I."/>
            <person name="Ha K.S."/>
            <person name="Kim Y.M."/>
            <person name="Lee H."/>
        </authorList>
    </citation>
    <scope>FUNCTION</scope>
    <scope>INTERACTION WITH CD151 AND INTEGRIN BETA1/ITGB1</scope>
    <scope>SUBCELLULAR LOCATION</scope>
</reference>
<reference key="67">
    <citation type="journal article" date="2012" name="J. Cell Biol.">
        <title>The novel synaptogenic protein Farp1 links postsynaptic cytoskeletal dynamics and transsynaptic organization.</title>
        <authorList>
            <person name="Cheadle L."/>
            <person name="Biederer T."/>
        </authorList>
    </citation>
    <scope>INTERACTION WITH FARP1</scope>
</reference>
<reference key="68">
    <citation type="journal article" date="2013" name="FASEB J.">
        <title>SCF E3 ligase F-box protein complex SCF(FBXL19) regulates cell migration by mediating Rac1 ubiquitination and degradation.</title>
        <authorList>
            <person name="Zhao J."/>
            <person name="Mialki R.K."/>
            <person name="Wei J."/>
            <person name="Coon T.A."/>
            <person name="Zou C."/>
            <person name="Chen B.B."/>
            <person name="Mallampalli R.K."/>
            <person name="Zhao Y."/>
        </authorList>
    </citation>
    <scope>FUNCTION</scope>
    <scope>MUTAGENESIS OF SER-71 AND LYS-166</scope>
    <scope>UBIQUITINATION AT LYS-166</scope>
</reference>
<reference key="69">
    <citation type="journal article" date="2013" name="J. Med. Genet.">
        <title>ARHGDIA: a novel gene implicated in nephrotic syndrome.</title>
        <authorList>
            <person name="Gupta I.R."/>
            <person name="Baldwin C."/>
            <person name="Auguste D."/>
            <person name="Ha K.C."/>
            <person name="El Andalousi J."/>
            <person name="Fahiminiya S."/>
            <person name="Bitzan M."/>
            <person name="Bernard C."/>
            <person name="Akbari M.R."/>
            <person name="Narod S.A."/>
            <person name="Rosenblatt D.S."/>
            <person name="Majewski J."/>
            <person name="Takano T."/>
        </authorList>
    </citation>
    <scope>INTERACTION WITH ARHGDIA</scope>
</reference>
<reference key="70">
    <citation type="journal article" date="2013" name="Sci. Signal.">
        <title>Beta-arrestin-dependent activation of the cofilin pathway is required for the scavenging activity of the atypical chemokine receptor D6.</title>
        <authorList>
            <person name="Borroni E.M."/>
            <person name="Cancellieri C."/>
            <person name="Vacchini A."/>
            <person name="Benureau Y."/>
            <person name="Lagane B."/>
            <person name="Bachelerie F."/>
            <person name="Arenzana-Seisdedos F."/>
            <person name="Mizuno K."/>
            <person name="Mantovani A."/>
            <person name="Bonecchi R."/>
            <person name="Locati M."/>
        </authorList>
    </citation>
    <scope>FUNCTION</scope>
</reference>
<reference key="71">
    <citation type="journal article" date="2013" name="Nat. Struct. Mol. Biol.">
        <title>A bacterial toxin catalyzing tyrosine glycosylation of Rho and deamidation of Gq and Gi proteins.</title>
        <authorList>
            <person name="Jank T."/>
            <person name="Bogdanovic X."/>
            <person name="Wirth C."/>
            <person name="Haaf E."/>
            <person name="Spoerner M."/>
            <person name="Boehmer K.E."/>
            <person name="Steinemann M."/>
            <person name="Orth J.H."/>
            <person name="Kalbitzer H.R."/>
            <person name="Warscheid B."/>
            <person name="Hunte C."/>
            <person name="Aktories K."/>
        </authorList>
    </citation>
    <scope>GLYCOSYLATION AT TYR-32 (MICROBIAL INFECTION)</scope>
</reference>
<reference key="72">
    <citation type="journal article" date="2013" name="Structure">
        <title>Structural basis for autoinhibition of the guanine nucleotide exchange factor FARP2.</title>
        <authorList>
            <person name="He X."/>
            <person name="Kuo Y.C."/>
            <person name="Rosche T.J."/>
            <person name="Zhang X."/>
        </authorList>
    </citation>
    <scope>INTERACTION WITH FARP2</scope>
</reference>
<reference key="73">
    <citation type="journal article" date="2014" name="Cell. Microbiol.">
        <title>Haemorrhagic toxin and lethal toxin from Clostridium sordellii strain vpi9048: molecular characterization and comparative analysis of substrate specificity of the large clostridial glucosylating toxins.</title>
        <authorList>
            <person name="Genth H."/>
            <person name="Pauillac S."/>
            <person name="Schelle I."/>
            <person name="Bouvet P."/>
            <person name="Bouchier C."/>
            <person name="Varela-Chavez C."/>
            <person name="Just I."/>
            <person name="Popoff M.R."/>
        </authorList>
    </citation>
    <scope>GLYCOSYLATION AT THR-35 (MICROBIAL INFECTION)</scope>
</reference>
<reference key="74">
    <citation type="journal article" date="2015" name="Proteomics">
        <title>N-terminome analysis of the human mitochondrial proteome.</title>
        <authorList>
            <person name="Vaca Jacome A.S."/>
            <person name="Rabilloud T."/>
            <person name="Schaeffer-Reiss C."/>
            <person name="Rompais M."/>
            <person name="Ayoub D."/>
            <person name="Lane L."/>
            <person name="Bairoch A."/>
            <person name="Van Dorsselaer A."/>
            <person name="Carapito C."/>
        </authorList>
    </citation>
    <scope>IDENTIFICATION BY MASS SPECTROMETRY [LARGE SCALE ANALYSIS]</scope>
</reference>
<reference key="75">
    <citation type="journal article" date="2017" name="Am. J. Hum. Genet.">
        <title>RAC1 Missense Mutations in Developmental Disorders with Diverse Phenotypes.</title>
        <authorList>
            <consortium name="Deciphering Developmental Disorders Study"/>
            <person name="Reijnders M.R.F."/>
            <person name="Ansor N.M."/>
            <person name="Kousi M."/>
            <person name="Yue W.W."/>
            <person name="Tan P.L."/>
            <person name="Clarkson K."/>
            <person name="Clayton-Smith J."/>
            <person name="Corning K."/>
            <person name="Jones J.R."/>
            <person name="Lam W.W.K."/>
            <person name="Mancini G.M.S."/>
            <person name="Marcelis C."/>
            <person name="Mohammed S."/>
            <person name="Pfundt R."/>
            <person name="Roifman M."/>
            <person name="Cohn R."/>
            <person name="Chitayat D."/>
            <person name="Millard T.H."/>
            <person name="Katsanis N."/>
            <person name="Brunner H.G."/>
            <person name="Banka S."/>
        </authorList>
    </citation>
    <scope>FUNCTION</scope>
    <scope>INVOLVEMENT IN MRD48</scope>
    <scope>VARIANTS MRD48 TYR-18; SER-39; LEU-51; MET-51; ASP-64; LEU-73 AND TYR-157</scope>
    <scope>CHARACTERIZATION OF VARIANTS MRD48 TYR-18; SER-39; MET-51; ASP-64; LEU-73 AND TYR-157</scope>
</reference>
<reference key="76">
    <citation type="journal article" date="2017" name="Science">
        <title>Nepsilon-fatty acylation of Rho GTPases by a MARTX toxin effector.</title>
        <authorList>
            <person name="Zhou Y."/>
            <person name="Huang C."/>
            <person name="Yin L."/>
            <person name="Wan M."/>
            <person name="Wang X."/>
            <person name="Li L."/>
            <person name="Liu Y."/>
            <person name="Wang Z."/>
            <person name="Fu P."/>
            <person name="Zhang N."/>
            <person name="Chen S."/>
            <person name="Liu X."/>
            <person name="Shao F."/>
            <person name="Zhu Y."/>
        </authorList>
    </citation>
    <scope>PALMITOYLATION AT LYS-183 AND LYS-184 (MICROBIAL INFECTION)</scope>
    <scope>SUBCELLULAR LOCATION</scope>
    <scope>MUTAGENESIS OF GLY-12; 183-LYS--LYS-188; LYS-183; LYS-184; 185-ARG--ARG-187; LYS-186 AND LYS-188</scope>
</reference>
<reference key="77">
    <citation type="journal article" date="2018" name="Nat. Cell Biol.">
        <title>Fam49/CYRI interacts with Rac1 and locally suppresses protrusions.</title>
        <authorList>
            <person name="Fort L."/>
            <person name="Batista J.M."/>
            <person name="Thomason P.A."/>
            <person name="Spence H.J."/>
            <person name="Whitelaw J.A."/>
            <person name="Tweedy L."/>
            <person name="Greaves J."/>
            <person name="Martin K.J."/>
            <person name="Anderson K.I."/>
            <person name="Brown P."/>
            <person name="Lilla S."/>
            <person name="Neilson M.P."/>
            <person name="Tafelmeyer P."/>
            <person name="Zanivan S."/>
            <person name="Ismail S."/>
            <person name="Bryant D.M."/>
            <person name="Tomkinson N.C.O."/>
            <person name="Chamberlain L.H."/>
            <person name="Mastick G.S."/>
            <person name="Insall R.H."/>
            <person name="Machesky L.M."/>
        </authorList>
    </citation>
    <scope>INTERACTION WITH CYRIB</scope>
    <scope>MUTAGENESIS OF GLY-12; THR-17 AND GLN-61</scope>
</reference>
<reference key="78">
    <citation type="journal article" date="2019" name="Nat. Microbiol.">
        <title>CYRI/FAM49B negatively regulates RAC1-driven cytoskeletal remodelling and protects against bacterial infection.</title>
        <authorList>
            <person name="Yuki K.E."/>
            <person name="Marei H."/>
            <person name="Fiskin E."/>
            <person name="Eva M.M."/>
            <person name="Gopal A.A."/>
            <person name="Schwartzentruber J.A."/>
            <person name="Majewski J."/>
            <person name="Cellier M."/>
            <person name="Mandl J.N."/>
            <person name="Vidal S.M."/>
            <person name="Malo D."/>
            <person name="Dikic I."/>
        </authorList>
    </citation>
    <scope>INTERACTION WITH CYRIB</scope>
</reference>
<reference key="79">
    <citation type="journal article" date="2020" name="Nat. Cell Biol.">
        <title>Mapping the proximity interaction network of the Rho-family GTPases reveals signalling pathways and regulatory mechanisms.</title>
        <authorList>
            <person name="Bagci H."/>
            <person name="Sriskandarajah N."/>
            <person name="Robert A."/>
            <person name="Boulais J."/>
            <person name="Elkholi I.E."/>
            <person name="Tran V."/>
            <person name="Lin Z.Y."/>
            <person name="Thibault M.P."/>
            <person name="Dube N."/>
            <person name="Faubert D."/>
            <person name="Hipfner D.R."/>
            <person name="Gingras A.C."/>
            <person name="Cote J.F."/>
        </authorList>
    </citation>
    <scope>INTERACTION WITH GARRE1</scope>
    <scope>MUTAGENESIS OF GLY-12</scope>
</reference>
<reference key="80">
    <citation type="journal article" date="2021" name="Autophagy">
        <title>TNFAIP8L2/TIPE2 impairs autolysosome reformation via modulating the RAC1-MTORC1 axis.</title>
        <authorList>
            <person name="Li W."/>
            <person name="Li Y."/>
            <person name="Guan Y."/>
            <person name="Du Y."/>
            <person name="Zhao M."/>
            <person name="Chen X."/>
            <person name="Zhu F."/>
            <person name="Guo C."/>
            <person name="Jia Y."/>
            <person name="Li Y."/>
            <person name="Wang X."/>
            <person name="Wang X."/>
            <person name="Shi Y."/>
            <person name="Wang Q."/>
            <person name="Li Y."/>
            <person name="Zhang L."/>
        </authorList>
    </citation>
    <scope>INTERACTION WITH TNFAIP8L2</scope>
</reference>
<reference key="81">
    <citation type="journal article" date="2022" name="Br. J. Dermatol.">
        <title>Germline intergenic duplications at Xq26.1 underlie Bazex-Dupre-Christol basal cell carcinoma susceptibility syndrome.</title>
        <authorList>
            <person name="Liu Y."/>
            <person name="Banka S."/>
            <person name="Huang Y."/>
            <person name="Hardman-Smart J."/>
            <person name="Pye D."/>
            <person name="Torrelo A."/>
            <person name="Beaman G.M."/>
            <person name="Kazanietz M.G."/>
            <person name="Baker M.J."/>
            <person name="Ferrazzano C."/>
            <person name="Shi C."/>
            <person name="Orozco G."/>
            <person name="Eyre S."/>
            <person name="van Geel M."/>
            <person name="Bygum A."/>
            <person name="Fischer J."/>
            <person name="Miedzybrodzka Z."/>
            <person name="Abuzahra F."/>
            <person name="Ruebben A."/>
            <person name="Cuvertino S."/>
            <person name="Ellingford J.M."/>
            <person name="Smith M.J."/>
            <person name="Evans D.G."/>
            <person name="Weppner-Parren L.J.M.T."/>
            <person name="van Steensel M.A.M."/>
            <person name="Chaudhary I.H."/>
            <person name="Mangham D.C."/>
            <person name="Lear J.T."/>
            <person name="Paus R."/>
            <person name="Frank J."/>
            <person name="Newman W.G."/>
            <person name="Zhang X."/>
        </authorList>
    </citation>
    <scope>INTERACTION WITH ARHGAP36</scope>
</reference>
<reference key="82">
    <citation type="journal article" date="1997" name="Nat. Struct. Biol.">
        <title>The crystal structure of human rac1, a member of the rho-family complexed with a GTP analogue.</title>
        <authorList>
            <person name="Hirshberg M."/>
            <person name="Stockley R.W."/>
            <person name="Dodson G."/>
            <person name="Webb M.R."/>
        </authorList>
    </citation>
    <scope>X-RAY CRYSTALLOGRAPHY (1.38 ANGSTROMS) OF 1-184 IN COMPLEX WITH GTP ANALOG</scope>
</reference>
<reference key="83">
    <citation type="journal article" date="2000" name="Mol. Cell">
        <title>Structure of the TPR domain of p67phox in complex with Rac.GTP.</title>
        <authorList>
            <person name="Lapouge K."/>
            <person name="Smith S.J."/>
            <person name="Walker P.A."/>
            <person name="Gamblin S.J."/>
            <person name="Smerdon S.J."/>
            <person name="Rittinger K."/>
        </authorList>
    </citation>
    <scope>X-RAY CRYSTALLOGRAPHY (2.4 ANGSTROMS) OF MUTANT LEU-61 IN COMPLEX WITH GTP AND NCF2</scope>
</reference>
<reference key="84">
    <citation type="journal article" date="2000" name="Nature">
        <title>Crystal structure of Rac1 in complex with the guanine nucleotide exchange region of Tiam1.</title>
        <authorList>
            <person name="Worthylake D.K."/>
            <person name="Rossman K.L."/>
            <person name="Sondek J."/>
        </authorList>
    </citation>
    <scope>X-RAY CRYSTALLOGRAPHY (2.8 ANGSTROMS) OF 1-177 IN COMPLEX WITH TIAM1</scope>
</reference>
<reference key="85">
    <citation type="journal article" date="2000" name="Mol. Cell">
        <title>Modulation of host signaling by a bacterial mimic: structure of the Salmonella effector SptP bound to Rac1.</title>
        <authorList>
            <person name="Stebbins C.E."/>
            <person name="Galan J.E."/>
        </authorList>
    </citation>
    <scope>X-RAY CRYSTALLOGRAPHY (2.3 ANGSTROMS) OF 1-184 IN COMPLEX WITH SALMONELLA SPTP</scope>
</reference>
<reference key="86">
    <citation type="journal article" date="2001" name="Nat. Struct. Biol.">
        <title>How the Pseudomonas aeruginosa ExoS toxin downregulates Rac.</title>
        <authorList>
            <person name="Wuertele M."/>
            <person name="Wolf E."/>
            <person name="Pederson K.J."/>
            <person name="Buchwald G."/>
            <person name="Ahmadian M.R."/>
            <person name="Barbieri J.T."/>
            <person name="Wittinghofer A."/>
        </authorList>
    </citation>
    <scope>X-RAY CRYSTALLOGRAPHY (2.0 ANGSTROMS) OF 1-176 IN COMPLEX WITH GTP ANALOG AND P.AERUGINOSA EXOS</scope>
</reference>
<reference key="87">
    <citation type="journal article" date="2001" name="Biochemistry">
        <title>Crystal structure of the Rac1-RhoGDI complex involved in NADPH oxidase activation.</title>
        <authorList>
            <person name="Grizot S."/>
            <person name="Faure J."/>
            <person name="Fieschi F."/>
            <person name="Vignais P.V."/>
            <person name="Dagher M.-C."/>
            <person name="Pebay-Peyroula E."/>
        </authorList>
    </citation>
    <scope>X-RAY CRYSTALLOGRAPHY (2.7 ANGSTROMS) IN COMPLEX WITH ARHGDIA</scope>
</reference>
<reference key="88">
    <citation type="journal article" date="2001" name="Nature">
        <title>The structural basis of Arfaptin-mediated cross-talk between Rac and Arf signalling pathways.</title>
        <authorList>
            <person name="Tarricone C."/>
            <person name="Xiao B."/>
            <person name="Justin N."/>
            <person name="Walker P.A."/>
            <person name="Rittinger K."/>
            <person name="Gamblin S.J."/>
            <person name="Smerdon S.J."/>
        </authorList>
    </citation>
    <scope>X-RAY CRYSTALLOGRAPHY (2.5 ANGSTROMS) IN COMPLEX WITH GTP ANALOG AND ARFIP2</scope>
</reference>
<reference key="89">
    <citation type="journal article" date="2004" name="J. Biol. Chem.">
        <title>Alternative splicing of Rac1 generates Rac1b, a self-activating GTPase.</title>
        <authorList>
            <person name="Fiegen D."/>
            <person name="Haeusler L.C."/>
            <person name="Blumenstein L."/>
            <person name="Herbrand U."/>
            <person name="Dvorsky R."/>
            <person name="Vetter I.R."/>
            <person name="Ahmadian M.R."/>
        </authorList>
    </citation>
    <scope>X-RAY CRYSTALLOGRAPHY (1.75 ANGSTROMS) OF ISOFORM B</scope>
    <scope>FUNCTION (ISOFORM B)</scope>
</reference>
<reference key="90">
    <citation type="journal article" date="2006" name="Cell">
        <title>Yersinia virulence depends on mimicry of host Rho-family nucleotide dissociation inhibitors.</title>
        <authorList>
            <person name="Prehna G."/>
            <person name="Ivanov M.I."/>
            <person name="Bliska J.B."/>
            <person name="Stebbins C.E."/>
        </authorList>
    </citation>
    <scope>X-RAY CRYSTALLOGRAPHY (2.6 ANGSTROMS) OF 1-184 IN COMPLEX WITH Y.PSEUDOTUBERCULOSIS YPKA</scope>
</reference>
<reference key="91">
    <citation type="journal article" date="2006" name="Nat. Struct. Mol. Biol.">
        <title>Crystal structure of Rac1 bound to its effector phospholipase C-beta2.</title>
        <authorList>
            <person name="Jezyk M.R."/>
            <person name="Snyder J.T."/>
            <person name="Gershberg S."/>
            <person name="Worthylake D.K."/>
            <person name="Harden T.K."/>
            <person name="Sondek J."/>
        </authorList>
    </citation>
    <scope>X-RAY CRYSTALLOGRAPHY (2.2 ANGSTROMS) OF 1-177 IN COMPLEX WITH GTP ANALOG AND PLCB2</scope>
    <scope>MUTAGENESIS OF PHE-37; TRP-56; LEU-67 AND LEU-70</scope>
</reference>
<reference key="92">
    <citation type="journal article" date="2011" name="J. Biol. Chem.">
        <title>Multiple factors confer specific Cdc42 and Rac protein activation by dedicator of cytokinesis (DOCK) nucleotide exchange factors.</title>
        <authorList>
            <person name="Kulkarni K."/>
            <person name="Yang J."/>
            <person name="Zhang Z."/>
            <person name="Barford D."/>
        </authorList>
    </citation>
    <scope>X-RAY CRYSTALLOGRAPHY (2.7 ANGSTROMS) OF 1-177 IN COMPLEX WITH DOCK2</scope>
</reference>
<reference evidence="93" key="93">
    <citation type="journal article" date="2024" name="Nat. Struct. Mol. Biol.">
        <title>Structural mechanisms of autoinhibition and substrate recognition by the ubiquitin ligase HACE1.</title>
        <authorList>
            <person name="During J."/>
            <person name="Wolter M."/>
            <person name="Toplak J.J."/>
            <person name="Torres C."/>
            <person name="Dybkov O."/>
            <person name="Fokkens T.J."/>
            <person name="Bohnsack K.E."/>
            <person name="Urlaub H."/>
            <person name="Steinchen W."/>
            <person name="Dienemann C."/>
            <person name="Lorenz S."/>
        </authorList>
    </citation>
    <scope>STRUCTURE BY ELECTRON MICROSCOPY (4.20 ANGSTROMS) IN COMPLEX WITH HACE1 AND GTP</scope>
    <scope>UBIQUITINATION AT LYS-147</scope>
    <scope>MUTAGENESIS OF GLN-61</scope>
</reference>
<reference evidence="94" key="94">
    <citation type="journal article" date="2024" name="Nature">
        <title>Structure of human phagocyte NADPH oxidase in the activated state.</title>
        <authorList>
            <person name="Liu X."/>
            <person name="Shi Y."/>
            <person name="Liu R."/>
            <person name="Song K."/>
            <person name="Chen L."/>
        </authorList>
    </citation>
    <scope>STRUCTURE BY ELECTRON MICROSCOPY (2.79 ANGSTROMS) OF 1-192 IN COMPLEX WITH CYBA; CYBB; NFC1; NFC2 AND GTP</scope>
    <scope>SUBUNIT</scope>
    <scope>FUNCTION</scope>
    <scope>IDENTIFICATION OF THE NADPH OXIDASE COMPLEX</scope>
</reference>
<keyword id="KW-0002">3D-structure</keyword>
<keyword id="KW-0025">Alternative splicing</keyword>
<keyword id="KW-1003">Cell membrane</keyword>
<keyword id="KW-0966">Cell projection</keyword>
<keyword id="KW-0963">Cytoplasm</keyword>
<keyword id="KW-0225">Disease variant</keyword>
<keyword id="KW-0325">Glycoprotein</keyword>
<keyword id="KW-0342">GTP-binding</keyword>
<keyword id="KW-0378">Hydrolase</keyword>
<keyword id="KW-0991">Intellectual disability</keyword>
<keyword id="KW-1017">Isopeptide bond</keyword>
<keyword id="KW-0449">Lipoprotein</keyword>
<keyword id="KW-0472">Membrane</keyword>
<keyword id="KW-0488">Methylation</keyword>
<keyword id="KW-0547">Nucleotide-binding</keyword>
<keyword id="KW-0539">Nucleus</keyword>
<keyword id="KW-0564">Palmitate</keyword>
<keyword id="KW-0597">Phosphoprotein</keyword>
<keyword id="KW-0636">Prenylation</keyword>
<keyword id="KW-1267">Proteomics identification</keyword>
<keyword id="KW-1185">Reference proteome</keyword>
<keyword id="KW-0770">Synapse</keyword>
<keyword id="KW-0832">Ubl conjugation</keyword>
<protein>
    <recommendedName>
        <fullName evidence="83">Ras-related C3 botulinum toxin substrate 1</fullName>
        <ecNumber evidence="50">3.6.5.2</ecNumber>
    </recommendedName>
    <alternativeName>
        <fullName>Cell migration-inducing gene 5 protein</fullName>
    </alternativeName>
    <alternativeName>
        <fullName>Ras-like protein TC25</fullName>
    </alternativeName>
    <alternativeName>
        <fullName>p21-Rac1</fullName>
    </alternativeName>
</protein>
<name>RAC1_HUMAN</name>
<gene>
    <name evidence="88" type="primary">RAC1</name>
    <name type="synonym">TC25</name>
    <name type="ORF">MIG5</name>
</gene>
<sequence length="192" mass="21450">MQAIKCVVVGDGAVGKTCLLISYTTNAFPGEYIPTVFDNYSANVMVDGKPVNLGLWDTAGQEDYDRLRPLSYPQTDVFLICFSLVSPASFENVRAKWYPEVRHHCPNTPIILVGTKLDLRDDKDTIEKLKEKKLTPITYPQGLAMAKEIGAVKYLECSALTQRGLKTVFDEAIRAVLCPPPVKKRKRKCLLL</sequence>
<proteinExistence type="evidence at protein level"/>
<comment type="function">
    <text evidence="2 3 21 25 54 55 59 62 70 77">Plasma membrane-associated small GTPase which cycles between active GTP-bound and inactive GDP-bound states. In its active state, binds to a variety of effector proteins to regulate cellular responses such as secretory processes, phagocytosis of apoptotic cells, epithelial cell polarization, neurons adhesion, migration and differentiation, and growth-factor induced formation of membrane ruffles (PubMed:1643658, PubMed:22843693, PubMed:23512198, PubMed:28886345). Rac1 p21/rho GDI heterodimer is the active component of the cytosolic factor sigma 1, which is involved in stimulation of the NADPH oxidase activity in macrophages. Essential for the SPATA13-mediated regulation of cell migration and adhesion assembly and disassembly. Stimulates PKN2 kinase activity (PubMed:9121475). In concert with RAB7A, plays a role in regulating the formation of RBs (ruffled borders) in osteoclasts (PubMed:1643658). In podocytes, promotes nuclear shuttling of NR3C2; this modulation is required for a proper kidney functioning. Required for atypical chemokine receptor ACKR2-induced LIMK1-PAK1-dependent phosphorylation of cofilin (CFL1) and for up-regulation of ACKR2 from endosomal compartment to cell membrane, increasing its efficiency in chemokine uptake and degradation. In neurons, is involved in dendritic spine formation and synaptic plasticity (By similarity). In hippocampal neurons, involved in spine morphogenesis and synapse formation, through local activation at synapses by guanine nucleotide exchange factors (GEFs), such as ARHGEF6/ARHGEF7/PIX (PubMed:12695502). In synapses, seems to mediate the regulation of F-actin cluster formation performed by SHANK3. In neurons, plays a crucial role in regulating GABA(A) receptor synaptic stability and hence GABAergic inhibitory synaptic transmission through its role in PAK1 activation and eventually F-actin stabilization (By similarity). Required for DSG3 translocation to cell-cell junctions, DSG3-mediated organization of cortical F-actin bundles and anchoring of actin at cell junctions; via interaction with DSG3 (PubMed:22796473). Subunit of the phagocyte NADPH oxidase complex that mediates the transfer of electrons from cytosolic NADPH to O2 to produce the superoxide anion (O2(-)) (PubMed:38355798).</text>
</comment>
<comment type="function">
    <molecule>Isoform B</molecule>
    <text evidence="23">Isoform B has an accelerated GEF-independent GDP/GTP exchange and an impaired GTP hydrolysis, which is restored partially by GTPase-activating proteins (PubMed:14625275). It is able to bind to the GTPase-binding domain of PAK but not full-length PAK in a GTP-dependent manner, suggesting that the insertion does not completely abolish effector interaction (PubMed:14625275).</text>
</comment>
<comment type="catalytic activity">
    <reaction evidence="50">
        <text>GTP + H2O = GDP + phosphate + H(+)</text>
        <dbReference type="Rhea" id="RHEA:19669"/>
        <dbReference type="ChEBI" id="CHEBI:15377"/>
        <dbReference type="ChEBI" id="CHEBI:15378"/>
        <dbReference type="ChEBI" id="CHEBI:37565"/>
        <dbReference type="ChEBI" id="CHEBI:43474"/>
        <dbReference type="ChEBI" id="CHEBI:58189"/>
        <dbReference type="EC" id="3.6.5.2"/>
    </reaction>
    <physiologicalReaction direction="left-to-right" evidence="86">
        <dbReference type="Rhea" id="RHEA:19670"/>
    </physiologicalReaction>
</comment>
<comment type="activity regulation">
    <text evidence="50">Regulated by guanine nucleotide exchange factors (GEFs) which promote the exchange of bound GDP for free GTP, GTPase activating proteins (GAPs) which increase the GTP hydrolysis activity, and GDP dissociation inhibitors which inhibit the dissociation of the nucleotide from the GTPase. GTP hydrolysis is stimulated by ARHGAP30.</text>
</comment>
<comment type="subunit">
    <text evidence="2 3 5 7 8 9 10 11 12 13 14 15 16 17 18 19 20 22 24 26 27 28 30 31 32 33 35 40 42 43 44 45 46 47 48 49 51 52 54 55 56 57 58 64 65 66 67 68 70 71 76 77 78">Interacts with NISCH. Interacts with PIP5K1A. Interacts with the GTP-bound form of RAB7A. Interacts with SRGAP2. Interacts with CYFIP1/SRA-1. Interacts with PLXNB3. Interacts with ARHGDIA; the interaction is induced by SEMA5A, mediated through PLXNB3 and inactivates and stabilizes RAC1. Interacts (GTP-bound form preferentially) with PKN2 (via the REM repeats); the interaction stimulates autophosphorylation and phosphorylation of PKN2. Interacts with the GEF proteins PREX1, RASGRF2, FARP1, FARP2, DOCK1, DOCK2 and DOCK7, which promote the exchange between GDP and GTP, and therefore activate it. Interacts with PARD6A, PARD6B and PARD6G in a GTP-dependent manner. Part of a quaternary complex containing PARD3, some PARD6 protein (PARD6A, PARD6B or PARD6G) and some atypical PKC protein (PRKCI or PRKCZ), which plays a central role in epithelial cell polarization. Found in a trimeric complex composed of DOCK1 and ELMO1, which plays a central role in phagocytosis of apoptotic cells. Interacts with RALBP1 via its effector domain. Interacts with PLXNB1. Part of a complex with MAP2K3, MAP3K3, CCM2 and DEF6. Interacts with BAIAP2, BAIAP2L1 and DEF6. Interacts with Y.pseudotuberculosis YPKA and PLCB2. Interacts with NOXA1. Interacts with ARHGEF2. Interacts with TBC1D2. Interacts with UNKL. Interacts with USP6. Interacts with SPATA13. Interacts with ARHGEF16; mediates activation of RAC1 by EPHA2. Interacts with ITGB4. Interacts with S100A8 and calprotectin (S100A8/9). Interacts with PACSIN2. Interacts with ITGB1BP1. Interacts (when active) with PPP5C (via TPR repeats); activates PPP5C phosphatase activity and translocates PPP5C to the cell membrane. Interacts with RAPH1 (via Ras associating and PH domains) (PubMed:18499456). Interacts with MTSS2 (via IMD domain); this interaction may be important to potentiate PDGF-induced RAC1 activation (PubMed:20875796). Interacts with PAK2 (PubMed:20696164). Interacts (GTP-bound form) with SH3RF1 and SH3RF3 (PubMed:20696164). Found in a complex with SH3RF1, MAPK8IP1/JIP1, MAP3K11/MLK3, MAP2K7/MKK7 and MAPK8/JNK1. Interacts (both active GTP- or inactive GDP-bound forms) with SH3RF2 (By similarity). Interacts (GTP-bound form preferentially) with CYRIB (PubMed:30250061, PubMed:31285585). Interacts with DOCK4 (via DOCKER domain); functions as a guanine nucleotide exchange factor (GEF) for RAC1 (PubMed:16464467). Interacts with GARRE1 (PubMed:31871319). Interacts with RAP1GDS1 (PubMed:12551911, PubMed:20709748). Interacts with TNFAIP8L2 (PubMed:32460619). May interact with ARHGAP36 (PubMed:35986704). Interacts with CD151 and integrin beta1/ITGB1 (PubMed:22843693). Interacts with DSG3; the interaction is required for DSG3 translocation to cell-cell junctions, organization of cortical F-actin bundles and actin anchoring at cell-cell junctions (PubMed:22796473). Component of the phagocyte NADPH oxidase complex composed of an obligatory core heterodimer formed by the membrane proteins CYBA and CYBB and the cytosolic regulatory subunits NCF1/p47-phox, NCF2/p67-phox, NCF4/p40-phox and the small GTPase RAC1 or RAC2 (PubMed:38355798). Interacts with NCF2 (PubMed:11090627).</text>
</comment>
<comment type="interaction">
    <interactant intactId="EBI-413628">
        <id>P63000</id>
    </interactant>
    <interactant intactId="EBI-372428">
        <id>Q9NY61</id>
        <label>AATF</label>
    </interactant>
    <organismsDiffer>false</organismsDiffer>
    <experiments>3</experiments>
</comment>
<comment type="interaction">
    <interactant intactId="EBI-413628">
        <id>P63000</id>
    </interactant>
    <interactant intactId="EBI-77613">
        <id>P05067</id>
        <label>APP</label>
    </interactant>
    <organismsDiffer>false</organismsDiffer>
    <experiments>3</experiments>
</comment>
<comment type="interaction">
    <interactant intactId="EBI-413628">
        <id>P63000</id>
    </interactant>
    <interactant intactId="EBI-638194">
        <id>P53365</id>
        <label>ARFIP2</label>
    </interactant>
    <organismsDiffer>false</organismsDiffer>
    <experiments>13</experiments>
</comment>
<comment type="interaction">
    <interactant intactId="EBI-413628">
        <id>P63000</id>
    </interactant>
    <interactant intactId="EBI-2825900">
        <id>Q92619</id>
        <label>ARHGAP45</label>
    </interactant>
    <organismsDiffer>false</organismsDiffer>
    <experiments>3</experiments>
</comment>
<comment type="interaction">
    <interactant intactId="EBI-413628">
        <id>P63000</id>
    </interactant>
    <interactant intactId="EBI-712693">
        <id>P52565</id>
        <label>ARHGDIA</label>
    </interactant>
    <organismsDiffer>false</organismsDiffer>
    <experiments>10</experiments>
</comment>
<comment type="interaction">
    <interactant intactId="EBI-413628">
        <id>P63000</id>
    </interactant>
    <interactant intactId="EBI-717515">
        <id>Q14155</id>
        <label>ARHGEF7</label>
    </interactant>
    <organismsDiffer>false</organismsDiffer>
    <experiments>8</experiments>
</comment>
<comment type="interaction">
    <interactant intactId="EBI-413628">
        <id>P63000</id>
    </interactant>
    <interactant intactId="EBI-525456">
        <id>Q9UQB8</id>
        <label>BAIAP2</label>
    </interactant>
    <organismsDiffer>false</organismsDiffer>
    <experiments>4</experiments>
</comment>
<comment type="interaction">
    <interactant intactId="EBI-413628">
        <id>P63000</id>
    </interactant>
    <interactant intactId="EBI-949378">
        <id>Q14457</id>
        <label>BECN1</label>
    </interactant>
    <organismsDiffer>false</organismsDiffer>
    <experiments>3</experiments>
</comment>
<comment type="interaction">
    <interactant intactId="EBI-413628">
        <id>P63000</id>
    </interactant>
    <interactant intactId="EBI-514538">
        <id>Q13490</id>
        <label>BIRC2</label>
    </interactant>
    <organismsDiffer>false</organismsDiffer>
    <experiments>2</experiments>
</comment>
<comment type="interaction">
    <interactant intactId="EBI-413628">
        <id>P63000</id>
    </interactant>
    <interactant intactId="EBI-603614">
        <id>Q03135</id>
        <label>CAV1</label>
    </interactant>
    <organismsDiffer>false</organismsDiffer>
    <experiments>3</experiments>
</comment>
<comment type="interaction">
    <interactant intactId="EBI-413628">
        <id>P63000</id>
    </interactant>
    <interactant intactId="EBI-396137">
        <id>Q9UJX2</id>
        <label>CDC23</label>
    </interactant>
    <organismsDiffer>false</organismsDiffer>
    <experiments>3</experiments>
</comment>
<comment type="interaction">
    <interactant intactId="EBI-413628">
        <id>P63000</id>
    </interactant>
    <interactant intactId="EBI-714925">
        <id>P52757</id>
        <label>CHN2</label>
    </interactant>
    <organismsDiffer>false</organismsDiffer>
    <experiments>4</experiments>
</comment>
<comment type="interaction">
    <interactant intactId="EBI-413628">
        <id>P63000</id>
    </interactant>
    <interactant intactId="EBI-446740">
        <id>Q14185</id>
        <label>DOCK1</label>
    </interactant>
    <organismsDiffer>false</organismsDiffer>
    <experiments>10</experiments>
</comment>
<comment type="interaction">
    <interactant intactId="EBI-413628">
        <id>P63000</id>
    </interactant>
    <interactant intactId="EBI-448771">
        <id>Q92608</id>
        <label>DOCK2</label>
    </interactant>
    <organismsDiffer>false</organismsDiffer>
    <experiments>3</experiments>
</comment>
<comment type="interaction">
    <interactant intactId="EBI-413628">
        <id>P63000</id>
    </interactant>
    <interactant intactId="EBI-352089">
        <id>O75369</id>
        <label>FLNB</label>
    </interactant>
    <organismsDiffer>false</organismsDiffer>
    <experiments>2</experiments>
</comment>
<comment type="interaction">
    <interactant intactId="EBI-413628">
        <id>P63000</id>
    </interactant>
    <interactant intactId="EBI-618189">
        <id>Q06547-2</id>
        <label>GABPB1</label>
    </interactant>
    <organismsDiffer>false</organismsDiffer>
    <experiments>3</experiments>
</comment>
<comment type="interaction">
    <interactant intactId="EBI-413628">
        <id>P63000</id>
    </interactant>
    <interactant intactId="EBI-308277">
        <id>Q8IYU2</id>
        <label>HACE1</label>
    </interactant>
    <organismsDiffer>false</organismsDiffer>
    <experiments>5</experiments>
</comment>
<comment type="interaction">
    <interactant intactId="EBI-413628">
        <id>P63000</id>
    </interactant>
    <interactant intactId="EBI-12094670">
        <id>Q8WUI4-6</id>
        <label>HDAC7</label>
    </interactant>
    <organismsDiffer>false</organismsDiffer>
    <experiments>4</experiments>
</comment>
<comment type="interaction">
    <interactant intactId="EBI-413628">
        <id>P63000</id>
    </interactant>
    <interactant intactId="EBI-297509">
        <id>P46940</id>
        <label>IQGAP1</label>
    </interactant>
    <organismsDiffer>false</organismsDiffer>
    <experiments>11</experiments>
</comment>
<comment type="interaction">
    <interactant intactId="EBI-413628">
        <id>P63000</id>
    </interactant>
    <interactant intactId="EBI-852823">
        <id>P05412</id>
        <label>JUN</label>
    </interactant>
    <organismsDiffer>false</organismsDiffer>
    <experiments>5</experiments>
</comment>
<comment type="interaction">
    <interactant intactId="EBI-413628">
        <id>P63000</id>
    </interactant>
    <interactant intactId="EBI-743960">
        <id>Q8N5Z5</id>
        <label>KCTD17</label>
    </interactant>
    <organismsDiffer>false</organismsDiffer>
    <experiments>3</experiments>
</comment>
<comment type="interaction">
    <interactant intactId="EBI-413628">
        <id>P63000</id>
    </interactant>
    <interactant intactId="EBI-10171697">
        <id>Q6A162</id>
        <label>KRT40</label>
    </interactant>
    <organismsDiffer>false</organismsDiffer>
    <experiments>3</experiments>
</comment>
<comment type="interaction">
    <interactant intactId="EBI-413628">
        <id>P63000</id>
    </interactant>
    <interactant intactId="EBI-11985629">
        <id>Q96JM7-2</id>
        <label>L3MBTL3</label>
    </interactant>
    <organismsDiffer>false</organismsDiffer>
    <experiments>3</experiments>
</comment>
<comment type="interaction">
    <interactant intactId="EBI-413628">
        <id>P63000</id>
    </interactant>
    <interactant intactId="EBI-5323863">
        <id>Q5S007</id>
        <label>LRRK2</label>
    </interactant>
    <organismsDiffer>false</organismsDiffer>
    <experiments>5</experiments>
</comment>
<comment type="interaction">
    <interactant intactId="EBI-413628">
        <id>P63000</id>
    </interactant>
    <interactant intactId="EBI-741037">
        <id>Q9BRK4</id>
        <label>LZTS2</label>
    </interactant>
    <organismsDiffer>false</organismsDiffer>
    <experiments>3</experiments>
</comment>
<comment type="interaction">
    <interactant intactId="EBI-413628">
        <id>P63000</id>
    </interactant>
    <interactant intactId="EBI-12345753">
        <id>Q13387-4</id>
        <label>MAPK8IP2</label>
    </interactant>
    <organismsDiffer>false</organismsDiffer>
    <experiments>3</experiments>
</comment>
<comment type="interaction">
    <interactant intactId="EBI-413628">
        <id>P63000</id>
    </interactant>
    <interactant intactId="EBI-724076">
        <id>Q99750</id>
        <label>MDFI</label>
    </interactant>
    <organismsDiffer>false</organismsDiffer>
    <experiments>3</experiments>
</comment>
<comment type="interaction">
    <interactant intactId="EBI-413628">
        <id>P63000</id>
    </interactant>
    <interactant intactId="EBI-747693">
        <id>P41227</id>
        <label>NAA10</label>
    </interactant>
    <organismsDiffer>false</organismsDiffer>
    <experiments>3</experiments>
</comment>
<comment type="interaction">
    <interactant intactId="EBI-413628">
        <id>P63000</id>
    </interactant>
    <interactant intactId="EBI-6148898">
        <id>Q01968</id>
        <label>OCRL</label>
    </interactant>
    <organismsDiffer>false</organismsDiffer>
    <experiments>3</experiments>
</comment>
<comment type="interaction">
    <interactant intactId="EBI-413628">
        <id>P63000</id>
    </interactant>
    <interactant intactId="EBI-1307">
        <id>Q13153</id>
        <label>PAK1</label>
    </interactant>
    <organismsDiffer>false</organismsDiffer>
    <experiments>26</experiments>
</comment>
<comment type="interaction">
    <interactant intactId="EBI-413628">
        <id>P63000</id>
    </interactant>
    <interactant intactId="EBI-1045887">
        <id>Q13177</id>
        <label>PAK2</label>
    </interactant>
    <organismsDiffer>false</organismsDiffer>
    <experiments>5</experiments>
</comment>
<comment type="interaction">
    <interactant intactId="EBI-413628">
        <id>P63000</id>
    </interactant>
    <interactant intactId="EBI-81876">
        <id>Q9NPB6</id>
        <label>PARD6A</label>
    </interactant>
    <organismsDiffer>false</organismsDiffer>
    <experiments>2</experiments>
</comment>
<comment type="interaction">
    <interactant intactId="EBI-413628">
        <id>P63000</id>
    </interactant>
    <interactant intactId="EBI-295391">
        <id>Q9BYG5</id>
        <label>PARD6B</label>
    </interactant>
    <organismsDiffer>false</organismsDiffer>
    <experiments>3</experiments>
</comment>
<comment type="interaction">
    <interactant intactId="EBI-413628">
        <id>P63000</id>
    </interactant>
    <interactant intactId="EBI-295417">
        <id>Q9BYG4</id>
        <label>PARD6G</label>
    </interactant>
    <organismsDiffer>false</organismsDiffer>
    <experiments>2</experiments>
</comment>
<comment type="interaction">
    <interactant intactId="EBI-413628">
        <id>P63000</id>
    </interactant>
    <interactant intactId="EBI-359873">
        <id>Q9UHV9</id>
        <label>PFDN2</label>
    </interactant>
    <organismsDiffer>false</organismsDiffer>
    <experiments>3</experiments>
</comment>
<comment type="interaction">
    <interactant intactId="EBI-413628">
        <id>P63000</id>
    </interactant>
    <interactant intactId="EBI-9090282">
        <id>P27986-2</id>
        <label>PIK3R1</label>
    </interactant>
    <organismsDiffer>false</organismsDiffer>
    <experiments>3</experiments>
</comment>
<comment type="interaction">
    <interactant intactId="EBI-413628">
        <id>P63000</id>
    </interactant>
    <interactant intactId="EBI-79387">
        <id>P19174</id>
        <label>PLCG1</label>
    </interactant>
    <organismsDiffer>false</organismsDiffer>
    <experiments>7</experiments>
</comment>
<comment type="interaction">
    <interactant intactId="EBI-413628">
        <id>P63000</id>
    </interactant>
    <interactant intactId="EBI-712238">
        <id>P00491</id>
        <label>PNP</label>
    </interactant>
    <organismsDiffer>false</organismsDiffer>
    <experiments>3</experiments>
</comment>
<comment type="interaction">
    <interactant intactId="EBI-413628">
        <id>P63000</id>
    </interactant>
    <interactant intactId="EBI-286199">
        <id>P41743</id>
        <label>PRKCI</label>
    </interactant>
    <organismsDiffer>false</organismsDiffer>
    <experiments>3</experiments>
</comment>
<comment type="interaction">
    <interactant intactId="EBI-413628">
        <id>P63000</id>
    </interactant>
    <interactant intactId="EBI-746389">
        <id>P52306</id>
        <label>RAP1GDS1</label>
    </interactant>
    <organismsDiffer>false</organismsDiffer>
    <experiments>4</experiments>
</comment>
<comment type="interaction">
    <interactant intactId="EBI-413628">
        <id>P63000</id>
    </interactant>
    <interactant intactId="EBI-365845">
        <id>Q92963</id>
        <label>RIT1</label>
    </interactant>
    <organismsDiffer>false</organismsDiffer>
    <experiments>5</experiments>
</comment>
<comment type="interaction">
    <interactant intactId="EBI-413628">
        <id>P63000</id>
    </interactant>
    <interactant intactId="EBI-458391">
        <id>P04271</id>
        <label>S100B</label>
    </interactant>
    <organismsDiffer>false</organismsDiffer>
    <experiments>3</experiments>
</comment>
<comment type="interaction">
    <interactant intactId="EBI-413628">
        <id>P63000</id>
    </interactant>
    <interactant intactId="EBI-1053182">
        <id>Q01105</id>
        <label>SET</label>
    </interactant>
    <organismsDiffer>false</organismsDiffer>
    <experiments>8</experiments>
</comment>
<comment type="interaction">
    <interactant intactId="EBI-413628">
        <id>P63000</id>
    </interactant>
    <interactant intactId="EBI-311339">
        <id>Q7Z6J0</id>
        <label>SH3RF1</label>
    </interactant>
    <organismsDiffer>false</organismsDiffer>
    <experiments>2</experiments>
</comment>
<comment type="interaction">
    <interactant intactId="EBI-413628">
        <id>P63000</id>
    </interactant>
    <interactant intactId="EBI-7975674">
        <id>Q8TEJ3</id>
        <label>SH3RF3</label>
    </interactant>
    <organismsDiffer>false</organismsDiffer>
    <experiments>6</experiments>
</comment>
<comment type="interaction">
    <interactant intactId="EBI-413628">
        <id>P63000</id>
    </interactant>
    <interactant intactId="EBI-25892332">
        <id>P43405-2</id>
        <label>SYK</label>
    </interactant>
    <organismsDiffer>false</organismsDiffer>
    <experiments>3</experiments>
</comment>
<comment type="interaction">
    <interactant intactId="EBI-413628">
        <id>P63000</id>
    </interactant>
    <interactant intactId="EBI-17438286">
        <id>Q8WTV1</id>
        <label>THAP3</label>
    </interactant>
    <organismsDiffer>false</organismsDiffer>
    <experiments>3</experiments>
</comment>
<comment type="interaction">
    <interactant intactId="EBI-413628">
        <id>P63000</id>
    </interactant>
    <interactant intactId="EBI-9073209">
        <id>Q6P589</id>
        <label>TNFAIP8L2</label>
    </interactant>
    <organismsDiffer>false</organismsDiffer>
    <experiments>2</experiments>
</comment>
<comment type="interaction">
    <interactant intactId="EBI-413628">
        <id>P63000</id>
    </interactant>
    <interactant intactId="EBI-12117154">
        <id>O60784-2</id>
        <label>TOM1</label>
    </interactant>
    <organismsDiffer>false</organismsDiffer>
    <experiments>3</experiments>
</comment>
<comment type="interaction">
    <interactant intactId="EBI-413628">
        <id>P63000</id>
    </interactant>
    <interactant intactId="EBI-7797561">
        <id>Q9H9P5</id>
        <label>UNKL</label>
    </interactant>
    <organismsDiffer>false</organismsDiffer>
    <experiments>2</experiments>
</comment>
<comment type="interaction">
    <interactant intactId="EBI-413628">
        <id>P63000</id>
    </interactant>
    <interactant intactId="EBI-954308">
        <id>Q9Y6N9</id>
        <label>USH1C</label>
    </interactant>
    <organismsDiffer>false</organismsDiffer>
    <experiments>3</experiments>
</comment>
<comment type="interaction">
    <interactant intactId="EBI-413628">
        <id>P63000</id>
    </interactant>
    <interactant intactId="EBI-473284">
        <id>Q9BVJ6</id>
        <label>UTP14A</label>
    </interactant>
    <organismsDiffer>false</organismsDiffer>
    <experiments>3</experiments>
</comment>
<comment type="interaction">
    <interactant intactId="EBI-413628">
        <id>P63000</id>
    </interactant>
    <interactant intactId="EBI-625518">
        <id>P15498</id>
        <label>VAV1</label>
    </interactant>
    <organismsDiffer>false</organismsDiffer>
    <experiments>2</experiments>
</comment>
<comment type="interaction">
    <interactant intactId="EBI-413628">
        <id>P63000</id>
    </interactant>
    <interactant intactId="EBI-11141397">
        <id>Q9UBQ0-2</id>
        <label>VPS29</label>
    </interactant>
    <organismsDiffer>false</organismsDiffer>
    <experiments>3</experiments>
</comment>
<comment type="interaction">
    <interactant intactId="EBI-413628">
        <id>P63000</id>
    </interactant>
    <interactant intactId="EBI-517127">
        <id>P98170</id>
        <label>XIAP</label>
    </interactant>
    <organismsDiffer>false</organismsDiffer>
    <experiments>3</experiments>
</comment>
<comment type="interaction">
    <interactant intactId="EBI-413628">
        <id>P63000</id>
    </interactant>
    <interactant intactId="EBI-12740386">
        <id>Q98PK8</id>
        <label>smc</label>
    </interactant>
    <organismsDiffer>true</organismsDiffer>
    <experiments>5</experiments>
</comment>
<comment type="interaction">
    <interactant intactId="EBI-7212896">
        <id>P63000-1</id>
    </interactant>
    <interactant intactId="EBI-1307">
        <id>Q13153</id>
        <label>PAK1</label>
    </interactant>
    <organismsDiffer>false</organismsDiffer>
    <experiments>3</experiments>
</comment>
<comment type="interaction">
    <interactant intactId="EBI-7212896">
        <id>P63000-1</id>
    </interactant>
    <interactant intactId="EBI-1046542">
        <id>Q8TCU6</id>
        <label>PREX1</label>
    </interactant>
    <organismsDiffer>false</organismsDiffer>
    <experiments>2</experiments>
</comment>
<comment type="interaction">
    <interactant intactId="EBI-7212896">
        <id>P63000-1</id>
    </interactant>
    <interactant intactId="EBI-9073209">
        <id>Q6P589</id>
        <label>TNFAIP8L2</label>
    </interactant>
    <organismsDiffer>false</organismsDiffer>
    <experiments>6</experiments>
</comment>
<comment type="interaction">
    <interactant intactId="EBI-7212896">
        <id>P63000-1</id>
    </interactant>
    <interactant intactId="EBI-15915736">
        <id>O75962-4</id>
        <label>TRIO</label>
    </interactant>
    <organismsDiffer>false</organismsDiffer>
    <experiments>2</experiments>
</comment>
<comment type="subcellular location">
    <subcellularLocation>
        <location evidence="25 55 63">Cell membrane</location>
        <topology evidence="37">Lipid-anchor</topology>
        <orientation evidence="25 42">Cytoplasmic side</orientation>
    </subcellularLocation>
    <subcellularLocation>
        <location evidence="29 42 52">Melanosome</location>
    </subcellularLocation>
    <subcellularLocation>
        <location evidence="42 63">Cytoplasm</location>
    </subcellularLocation>
    <subcellularLocation>
        <location evidence="2">Cell projection</location>
        <location evidence="2">Lamellipodium</location>
    </subcellularLocation>
    <subcellularLocation>
        <location evidence="2">Cell projection</location>
        <location evidence="2">Dendrite</location>
    </subcellularLocation>
    <subcellularLocation>
        <location evidence="3">Synapse</location>
    </subcellularLocation>
    <subcellularLocation>
        <location evidence="19">Nucleus</location>
    </subcellularLocation>
    <text evidence="2 3 19 29 37">Inner surface of plasma membrane possibly with attachment requiring prenylation of the C-terminal cysteine (PubMed:1903399). Identified by mass spectrometry in melanosome fractions from stage I to stage IV (PubMed:17081065). Found in the ruffled border (a late endosomal-like compartment in the plasma membrane) of bone-resorbing osteoclasts. Localizes to the lamellipodium in a SH3RF1-dependent manner (By similarity). In macrophages, cytoplasmic location increases upon CSF1 stimulation (By similarity). Activation by GTP-binding promotes nuclear localization (PubMed:12551911).</text>
</comment>
<comment type="alternative products">
    <event type="alternative splicing"/>
    <isoform>
        <id>P63000-1</id>
        <id>P15154-1</id>
        <name>A</name>
        <name>Rac1A</name>
        <sequence type="displayed"/>
    </isoform>
    <isoform>
        <id>P63000-2</id>
        <id>P15154-2</id>
        <name>B</name>
        <name>Rac1B</name>
        <name>Rac1ins</name>
        <sequence type="described" ref="VSP_005710"/>
    </isoform>
</comment>
<comment type="tissue specificity">
    <text>Isoform B is predominantly identified in skin and epithelial tissues from the intestinal tract. Its expression is elevated in colorectal tumors at various stages of neoplastic progression, as compared to their respective adjacent tissues.</text>
</comment>
<comment type="domain">
    <text evidence="31">The effector region mediates interaction with DEF6.</text>
</comment>
<comment type="PTM">
    <text evidence="34 53 69">GTP-bound active form is ubiquitinated at Lys-147 by HACE1, leading to its degradation by the proteasome.</text>
</comment>
<comment type="PTM">
    <text evidence="6">Phosphorylated by AKT at Ser-71.</text>
</comment>
<comment type="PTM">
    <text evidence="59">Ubiquitinated at Lys-166 in a FBXL19-mediated manner; leading to proteasomal degradation.</text>
</comment>
<comment type="PTM">
    <text evidence="38 39">(Microbial infection) AMPylation at Tyr-32 and Thr-35 are mediated by bacterial enzymes in case of infection by H.somnus and V.parahaemolyticus, respectively. AMPylation occurs in the effector region and leads to inactivation of the GTPase activity by preventing the interaction with downstream effectors, thereby inhibiting actin assembly in infected cells. It is unclear whether some human enzyme mediates AMPylation; FICD has such ability in vitro but additional experiments remain to be done to confirm results in vivo.</text>
</comment>
<comment type="PTM">
    <text evidence="60">(Microbial infection) Glycosylated at Tyr-32 by Photorhabdus asymbiotica toxin PAU_02230. Mono-O-GlcNAcylation by PAU_02230 inhibits downstream signaling by an impaired interaction with diverse regulator and effector proteins of Rac and leads to actin disassembly.</text>
</comment>
<comment type="PTM">
    <text evidence="41 61 72 73 74">(Microbial infection) Glucosylated at Thr-35 by C.difficile toxins TcdA and TcdB in the colonic epithelium, and by P.sordellii toxin TcsL in the vascular endothelium (PubMed:19744486, PubMed:24905543, PubMed:7775453, PubMed:7777059, PubMed:8626575). Monoglucosylation completely prevents the recognition of the downstream effector, blocking the GTPases in their inactive form, leading to actin cytoskeleton disruption and cell death, resulting in the loss of colonic epithelial barrier function (PubMed:7775453, PubMed:7777059).</text>
</comment>
<comment type="PTM">
    <text evidence="75">(Microbial infection) Glycosylated (O-GlcNAcylated) at Thr-35 by C.novyi toxin TcdA (PubMed:8810274). O-GlcNAcylation completely prevents the recognition of the downstream effector, blocking the GTPases in their inactive form, leading to actin cytoskeleton disruption (PubMed:8810274).</text>
</comment>
<comment type="PTM">
    <text evidence="63">(Microbial infection) Palmitoylated by the N-epsilon-fatty acyltransferase F2 chain of V.cholerae toxin RtxA (PubMed:29074776). Palmitoylation inhibits activation by guanine nucleotide exchange factors (GEFs), preventing Rho GTPase signaling (PubMed:29074776).</text>
</comment>
<comment type="disease" evidence="62">
    <disease id="DI-05131">
        <name>Intellectual developmental disorder, autosomal dominant 48</name>
        <acronym>MRD48</acronym>
        <description>A disorder characterized by significantly below average general intellectual functioning associated with impairments in adaptive behavior and manifested during the developmental period. MRD48 patients manifest global developmental delay and moderate to severe intellectual disability.</description>
        <dbReference type="MIM" id="617751"/>
    </disease>
    <text>The disease is caused by variants affecting the gene represented in this entry.</text>
</comment>
<comment type="similarity">
    <text evidence="83">Belongs to the small GTPase superfamily. Rho family.</text>
</comment>
<comment type="caution">
    <text evidence="84 87">The interaction between DSCAM, PAK1 and RAC1 has been described. This article has been withdrawn by the authors.</text>
</comment>
<comment type="sequence caution" evidence="83">
    <conflict type="erroneous initiation">
        <sequence resource="EMBL-CDS" id="AAZ80485"/>
    </conflict>
    <text>Truncated N-terminus.</text>
</comment>